<protein>
    <recommendedName>
        <fullName evidence="38">Myeloid differentiation primary response protein MyD88</fullName>
    </recommendedName>
</protein>
<name>MYD88_HUMAN</name>
<keyword id="KW-0002">3D-structure</keyword>
<keyword id="KW-0025">Alternative splicing</keyword>
<keyword id="KW-0051">Antiviral defense</keyword>
<keyword id="KW-0963">Cytoplasm</keyword>
<keyword id="KW-0225">Disease variant</keyword>
<keyword id="KW-0391">Immunity</keyword>
<keyword id="KW-0395">Inflammatory response</keyword>
<keyword id="KW-0399">Innate immunity</keyword>
<keyword id="KW-0539">Nucleus</keyword>
<keyword id="KW-0597">Phosphoprotein</keyword>
<keyword id="KW-1267">Proteomics identification</keyword>
<keyword id="KW-1185">Reference proteome</keyword>
<keyword id="KW-0832">Ubl conjugation</keyword>
<feature type="chain" id="PRO_0000096666" description="Myeloid differentiation primary response protein MyD88">
    <location>
        <begin position="1"/>
        <end position="296"/>
    </location>
</feature>
<feature type="domain" description="Death" evidence="3">
    <location>
        <begin position="54"/>
        <end position="109"/>
    </location>
</feature>
<feature type="domain" description="TIR" evidence="4">
    <location>
        <begin position="159"/>
        <end position="293"/>
    </location>
</feature>
<feature type="region of interest" description="Intermediate domain" evidence="1">
    <location>
        <begin position="110"/>
        <end position="155"/>
    </location>
</feature>
<feature type="modified residue" description="Phosphoserine" evidence="42">
    <location>
        <position position="244"/>
    </location>
</feature>
<feature type="splice variant" id="VSP_053764" description="In isoform 5." evidence="36">
    <original>MAAGGPGAGSAAPVSSTSSLPL</original>
    <variation>M</variation>
    <location>
        <begin position="1"/>
        <end position="22"/>
    </location>
</feature>
<feature type="splice variant" id="VSP_038887" description="In isoform 2." evidence="36">
    <location>
        <begin position="110"/>
        <end position="154"/>
    </location>
</feature>
<feature type="splice variant" id="VSP_043498" description="In isoform 4." evidence="36">
    <original>E</original>
    <variation>G</variation>
    <location>
        <position position="110"/>
    </location>
</feature>
<feature type="splice variant" id="VSP_043499" description="In isoform 4." evidence="36">
    <location>
        <begin position="111"/>
        <end position="155"/>
    </location>
</feature>
<feature type="splice variant" id="VSP_043500" description="In isoform 3 and isoform 4." evidence="36">
    <original>HMPERFDAFICYCPSDIQFVQEMIRQLEQTNYRLKLCVSDRDVLPGTCVWSIASELIEKRCRRMVVVVSDDYLQSKECDFQTKFALSLSPGAHQKRLIPIKYKAMKKEFPSILRFITVCDYTNPCTKSWFWTRLAKALSLP</original>
    <variation>AAGWWWLSLMITCRARNVTSRPNLHSASLQVPIRSD</variation>
    <location>
        <begin position="156"/>
        <end position="296"/>
    </location>
</feature>
<feature type="splice variant" id="VSP_053765" description="In isoform 6." evidence="37">
    <original>R</original>
    <variation>RLARRPRGG</variation>
    <location>
        <position position="215"/>
    </location>
</feature>
<feature type="sequence variant" id="VAR_072893" description="Rare variant; uncertain significance; loss of NF-kappa-B complex activation; loss of interaction with IRAK4; reduces homooligomerization; dbSNP:rs1319438." evidence="17 25">
    <original>S</original>
    <variation>Y</variation>
    <location>
        <position position="34"/>
    </location>
</feature>
<feature type="sequence variant" id="VAR_073252" description="Found in hematological malignancies; uncertain significance; somatic mutation; dbSNP:rs770387646." evidence="19">
    <original>V</original>
    <variation>M</variation>
    <location>
        <position position="39"/>
    </location>
</feature>
<feature type="sequence variant" id="VAR_072894" description="In IMD68; loss of NF-kappa-B complex activation." evidence="18 25">
    <location>
        <position position="52"/>
    </location>
</feature>
<feature type="sequence variant" id="VAR_047953" description="In IMD68; results in a loss of function; loss of NF-kappa-B complex activation; dbSNP:rs137853065." evidence="11 18 25">
    <original>L</original>
    <variation>P</variation>
    <location>
        <position position="93"/>
    </location>
</feature>
<feature type="sequence variant" id="VAR_072895" description="Found in hematological malignancies; uncertain significance; somatic mutation; loss of NF-kappa-B complex activation; loss of interaction with IRAK4; reduces homooligomerization; dbSNP:rs199396." evidence="17 25 34">
    <original>R</original>
    <variation>C</variation>
    <location>
        <position position="98"/>
    </location>
</feature>
<feature type="sequence variant" id="VAR_073253" description="Found in hematological malignancies; uncertain significance; somatic mutation." evidence="19">
    <original>S</original>
    <variation>G</variation>
    <location>
        <position position="136"/>
    </location>
</feature>
<feature type="sequence variant" id="VAR_073254" description="Found in hematological malignancies; uncertain significance; somatic mutation; dbSNP:rs2125777592." evidence="19">
    <original>S</original>
    <variation>I</variation>
    <location>
        <position position="136"/>
    </location>
</feature>
<feature type="sequence variant" id="VAR_072896" description="Found in hematological malignancies; uncertain significance; somatic mutation; no effect on NF-kappaB complex activation; dbSNP:rs41285117." evidence="17 25">
    <original>M</original>
    <variation>I</variation>
    <location>
        <position position="178"/>
    </location>
</feature>
<feature type="sequence variant" id="VAR_047954" description="In IMD68; results in a loss of function; decreases NF-kappa-B complex activation; dbSNP:rs137853064." evidence="11 13 18 25">
    <original>R</original>
    <variation>C</variation>
    <location>
        <position position="196"/>
    </location>
</feature>
<feature type="sequence variant" id="VAR_073255" description="Found in hematological malignancies; uncertain significance; somatic mutation; dbSNP:rs776995408." evidence="19">
    <original>V</original>
    <variation>F</variation>
    <location>
        <position position="204"/>
    </location>
</feature>
<feature type="sequence variant" id="VAR_073256" description="Found in hematological malignancies; uncertain significance; somatic mutation." evidence="19">
    <original>W</original>
    <variation>R</variation>
    <location>
        <position position="205"/>
    </location>
</feature>
<feature type="sequence variant" id="VAR_073257" description="Found in hematological malignancies; uncertain significance; somatic mutation; dbSNP:rs1701052715." evidence="19">
    <original>S</original>
    <variation>C</variation>
    <location>
        <position position="206"/>
    </location>
</feature>
<feature type="sequence variant" id="VAR_073258" description="Found in hematological malignancies; uncertain significance; somatic mutation." evidence="19">
    <original>I</original>
    <variation>T</variation>
    <location>
        <position position="207"/>
    </location>
</feature>
<feature type="sequence variant" id="VAR_073259" description="Found in hematological malignancies; uncertain significance; somatic mutation; constitutively activates NF-kappaB complex activation; dbSNP:rs2125778867." evidence="19">
    <original>S</original>
    <variation>R</variation>
    <location>
        <position position="209"/>
    </location>
</feature>
<feature type="sequence variant" id="VAR_073260" description="Found in hematological malignancies; uncertain significance; somatic mutation; constitutively activates NF-kappaB complex activation." evidence="19">
    <original>M</original>
    <variation>T</variation>
    <location>
        <position position="219"/>
    </location>
</feature>
<feature type="sequence variant" id="VAR_073261" description="Found in hematological malignancies; uncertain significance; somatic mutation; constitutively activates NF-kappaB complex activation; dbSNP:rs1353791431." evidence="19">
    <original>S</original>
    <variation>N</variation>
    <location>
        <position position="230"/>
    </location>
</feature>
<feature type="sequence variant" id="VAR_073262" description="In WM1; uncertain significance; somatic mutation; constitutively activates NF-kappaB complex activation; gain-of-function mutation; does not affect interaction with IRAK4; dbSNP:rs387907272." evidence="19 21 26">
    <original>L</original>
    <variation>P</variation>
    <location>
        <position position="252"/>
    </location>
</feature>
<feature type="sequence variant" id="VAR_073263" description="Found in hematological malignancies; uncertain significance; somatic mutation; no effect on NF-kappaB complex activation." evidence="19">
    <original>T</original>
    <variation>P</variation>
    <location>
        <position position="281"/>
    </location>
</feature>
<feature type="mutagenesis site" description="In Pococurante (Poc); abolished MYD88-dependent sensing of most Toll-like receptor (TLR) ligands." evidence="23">
    <original>I</original>
    <variation>N</variation>
    <location>
        <position position="179"/>
    </location>
</feature>
<feature type="mutagenesis site" description="Reduced interaction with TIRAP, and strongly reduced activity. Strongly reduced interaction with TIRAP; when associated with A-288." evidence="13">
    <original>R</original>
    <variation>A</variation>
    <location>
        <position position="196"/>
    </location>
</feature>
<feature type="mutagenesis site" description="Slightly reduced activity." evidence="13">
    <original>D</original>
    <variation>A</variation>
    <location>
        <position position="197"/>
    </location>
</feature>
<feature type="mutagenesis site" description="Abolished interaction with E.coli TcpC without affecting ability to promote Toll-like receptor (TLR)-mediated cytokine production; when associated with S-280." evidence="23">
    <original>C</original>
    <variation>S</variation>
    <location>
        <position position="203"/>
    </location>
</feature>
<feature type="mutagenesis site" description="Strongly reduced activity." evidence="13">
    <original>R</original>
    <variation>A</variation>
    <location>
        <position position="217"/>
    </location>
</feature>
<feature type="mutagenesis site" description="Abolished interaction with E.coli TcpC without affecting ability to promote Toll-like receptor (TLR)-mediated cytokine production; when associated with S-203." evidence="23">
    <original>C</original>
    <variation>S</variation>
    <location>
        <position position="280"/>
    </location>
</feature>
<feature type="mutagenesis site" description="Slightly reduced activity." evidence="13">
    <original>K</original>
    <variation>A</variation>
    <location>
        <position position="282"/>
    </location>
</feature>
<feature type="mutagenesis site" description="Slightly reduced activity, and reduced interaction with TIRAP. Strongly reduced interaction with TIRAP; when associated with A-196." evidence="13">
    <original>R</original>
    <variation>A</variation>
    <location>
        <position position="288"/>
    </location>
</feature>
<feature type="sequence conflict" description="In Ref. 8; BI524129." evidence="38" ref="8">
    <original>K</original>
    <variation>T</variation>
    <location>
        <position position="190"/>
    </location>
</feature>
<feature type="sequence conflict" description="In Ref. 8; BI524129." evidence="38" ref="8">
    <original>VS</original>
    <variation>WL</variation>
    <location>
        <begin position="223"/>
        <end position="224"/>
    </location>
</feature>
<feature type="helix" evidence="46">
    <location>
        <begin position="22"/>
        <end position="24"/>
    </location>
</feature>
<feature type="helix" evidence="46">
    <location>
        <begin position="27"/>
        <end position="37"/>
    </location>
</feature>
<feature type="strand" evidence="46">
    <location>
        <begin position="42"/>
        <end position="44"/>
    </location>
</feature>
<feature type="helix" evidence="46">
    <location>
        <begin position="47"/>
        <end position="53"/>
    </location>
</feature>
<feature type="helix" evidence="46">
    <location>
        <begin position="58"/>
        <end position="64"/>
    </location>
</feature>
<feature type="strand" evidence="43">
    <location>
        <begin position="66"/>
        <end position="69"/>
    </location>
</feature>
<feature type="helix" evidence="46">
    <location>
        <begin position="70"/>
        <end position="77"/>
    </location>
</feature>
<feature type="strand" evidence="46">
    <location>
        <begin position="79"/>
        <end position="81"/>
    </location>
</feature>
<feature type="helix" evidence="46">
    <location>
        <begin position="86"/>
        <end position="95"/>
    </location>
</feature>
<feature type="helix" evidence="46">
    <location>
        <begin position="100"/>
        <end position="104"/>
    </location>
</feature>
<feature type="helix" evidence="46">
    <location>
        <begin position="106"/>
        <end position="120"/>
    </location>
</feature>
<feature type="strand" evidence="45">
    <location>
        <begin position="159"/>
        <end position="166"/>
    </location>
</feature>
<feature type="helix" evidence="45">
    <location>
        <begin position="169"/>
        <end position="171"/>
    </location>
</feature>
<feature type="helix" evidence="45">
    <location>
        <begin position="172"/>
        <end position="183"/>
    </location>
</feature>
<feature type="strand" evidence="45">
    <location>
        <begin position="185"/>
        <end position="187"/>
    </location>
</feature>
<feature type="strand" evidence="45">
    <location>
        <begin position="191"/>
        <end position="194"/>
    </location>
</feature>
<feature type="helix" evidence="45">
    <location>
        <begin position="196"/>
        <end position="198"/>
    </location>
</feature>
<feature type="helix" evidence="45">
    <location>
        <begin position="209"/>
        <end position="211"/>
    </location>
</feature>
<feature type="helix" evidence="45">
    <location>
        <begin position="212"/>
        <end position="215"/>
    </location>
</feature>
<feature type="strand" evidence="45">
    <location>
        <begin position="216"/>
        <end position="223"/>
    </location>
</feature>
<feature type="helix" evidence="45">
    <location>
        <begin position="227"/>
        <end position="229"/>
    </location>
</feature>
<feature type="helix" evidence="45">
    <location>
        <begin position="231"/>
        <end position="242"/>
    </location>
</feature>
<feature type="helix" evidence="45">
    <location>
        <begin position="247"/>
        <end position="251"/>
    </location>
</feature>
<feature type="strand" evidence="45">
    <location>
        <begin position="252"/>
        <end position="256"/>
    </location>
</feature>
<feature type="helix" evidence="45">
    <location>
        <begin position="266"/>
        <end position="268"/>
    </location>
</feature>
<feature type="strand" evidence="44">
    <location>
        <begin position="269"/>
        <end position="271"/>
    </location>
</feature>
<feature type="strand" evidence="47">
    <location>
        <begin position="274"/>
        <end position="277"/>
    </location>
</feature>
<feature type="helix" evidence="45">
    <location>
        <begin position="279"/>
        <end position="281"/>
    </location>
</feature>
<feature type="helix" evidence="47">
    <location>
        <begin position="282"/>
        <end position="284"/>
    </location>
</feature>
<feature type="helix" evidence="45">
    <location>
        <begin position="285"/>
        <end position="294"/>
    </location>
</feature>
<organism>
    <name type="scientific">Homo sapiens</name>
    <name type="common">Human</name>
    <dbReference type="NCBI Taxonomy" id="9606"/>
    <lineage>
        <taxon>Eukaryota</taxon>
        <taxon>Metazoa</taxon>
        <taxon>Chordata</taxon>
        <taxon>Craniata</taxon>
        <taxon>Vertebrata</taxon>
        <taxon>Euteleostomi</taxon>
        <taxon>Mammalia</taxon>
        <taxon>Eutheria</taxon>
        <taxon>Euarchontoglires</taxon>
        <taxon>Primates</taxon>
        <taxon>Haplorrhini</taxon>
        <taxon>Catarrhini</taxon>
        <taxon>Hominidae</taxon>
        <taxon>Homo</taxon>
    </lineage>
</organism>
<dbReference type="EMBL" id="U70451">
    <property type="protein sequence ID" value="AAB49967.1"/>
    <property type="molecule type" value="mRNA"/>
</dbReference>
<dbReference type="EMBL" id="U84408">
    <property type="protein sequence ID" value="AAC50954.1"/>
    <property type="molecule type" value="mRNA"/>
</dbReference>
<dbReference type="EMBL" id="AB446470">
    <property type="protein sequence ID" value="BAG55247.1"/>
    <property type="molecule type" value="mRNA"/>
</dbReference>
<dbReference type="EMBL" id="BT007376">
    <property type="protein sequence ID" value="AAP36040.1"/>
    <property type="molecule type" value="mRNA"/>
</dbReference>
<dbReference type="EMBL" id="AK296570">
    <property type="protein sequence ID" value="BAG59190.1"/>
    <property type="molecule type" value="mRNA"/>
</dbReference>
<dbReference type="EMBL" id="AK296716">
    <property type="protein sequence ID" value="BAG59306.1"/>
    <property type="molecule type" value="mRNA"/>
</dbReference>
<dbReference type="EMBL" id="AK298650">
    <property type="protein sequence ID" value="BAG60822.1"/>
    <property type="status" value="ALT_INIT"/>
    <property type="molecule type" value="mRNA"/>
</dbReference>
<dbReference type="EMBL" id="AK298666">
    <property type="protein sequence ID" value="BAG60834.1"/>
    <property type="status" value="ALT_INIT"/>
    <property type="molecule type" value="mRNA"/>
</dbReference>
<dbReference type="EMBL" id="AP006309">
    <property type="status" value="NOT_ANNOTATED_CDS"/>
    <property type="molecule type" value="Genomic_DNA"/>
</dbReference>
<dbReference type="EMBL" id="CH471055">
    <property type="protein sequence ID" value="EAW64521.1"/>
    <property type="status" value="ALT_SEQ"/>
    <property type="molecule type" value="Genomic_DNA"/>
</dbReference>
<dbReference type="EMBL" id="BC013589">
    <property type="protein sequence ID" value="AAH13589.1"/>
    <property type="molecule type" value="mRNA"/>
</dbReference>
<dbReference type="EMBL" id="BI524129">
    <property type="status" value="NOT_ANNOTATED_CDS"/>
    <property type="molecule type" value="mRNA"/>
</dbReference>
<dbReference type="CCDS" id="CCDS2674.3">
    <molecule id="Q99836-1"/>
</dbReference>
<dbReference type="CCDS" id="CCDS54565.2">
    <molecule id="Q99836-6"/>
</dbReference>
<dbReference type="CCDS" id="CCDS54566.2">
    <molecule id="Q99836-3"/>
</dbReference>
<dbReference type="CCDS" id="CCDS54567.2">
    <molecule id="Q99836-2"/>
</dbReference>
<dbReference type="CCDS" id="CCDS54568.2">
    <molecule id="Q99836-4"/>
</dbReference>
<dbReference type="RefSeq" id="NP_001166037.2">
    <molecule id="Q99836-4"/>
    <property type="nucleotide sequence ID" value="NM_001172566.2"/>
</dbReference>
<dbReference type="RefSeq" id="NP_001166038.2">
    <molecule id="Q99836-6"/>
    <property type="nucleotide sequence ID" value="NM_001172567.2"/>
</dbReference>
<dbReference type="RefSeq" id="NP_001166039.2">
    <molecule id="Q99836-2"/>
    <property type="nucleotide sequence ID" value="NM_001172568.2"/>
</dbReference>
<dbReference type="RefSeq" id="NP_001166040.2">
    <molecule id="Q99836-3"/>
    <property type="nucleotide sequence ID" value="NM_001172569.3"/>
</dbReference>
<dbReference type="RefSeq" id="NP_002459.3">
    <molecule id="Q99836-1"/>
    <property type="nucleotide sequence ID" value="NM_002468.5"/>
</dbReference>
<dbReference type="PDB" id="2JS7">
    <property type="method" value="NMR"/>
    <property type="chains" value="A=146-296"/>
</dbReference>
<dbReference type="PDB" id="2Z5V">
    <property type="method" value="NMR"/>
    <property type="chains" value="A=148-296"/>
</dbReference>
<dbReference type="PDB" id="3MOP">
    <property type="method" value="X-ray"/>
    <property type="resolution" value="3.40 A"/>
    <property type="chains" value="A/B/C/D/E/F=20-117"/>
</dbReference>
<dbReference type="PDB" id="4DOM">
    <property type="method" value="X-ray"/>
    <property type="resolution" value="1.80 A"/>
    <property type="chains" value="A=157-296"/>
</dbReference>
<dbReference type="PDB" id="4EO7">
    <property type="method" value="X-ray"/>
    <property type="resolution" value="1.45 A"/>
    <property type="chains" value="A=157-296"/>
</dbReference>
<dbReference type="PDB" id="6I3N">
    <property type="method" value="EM"/>
    <property type="resolution" value="3.10 A"/>
    <property type="chains" value="A/B/C/D/E/F/G/H/I/J/K/L/M=1-151"/>
</dbReference>
<dbReference type="PDB" id="7BEQ">
    <property type="method" value="EM"/>
    <property type="resolution" value="3.00 A"/>
    <property type="chains" value="A=154-296"/>
</dbReference>
<dbReference type="PDB" id="7BER">
    <property type="method" value="X-ray"/>
    <property type="resolution" value="2.30 A"/>
    <property type="chains" value="A=154-296"/>
</dbReference>
<dbReference type="PDB" id="7L6W">
    <property type="method" value="X-ray"/>
    <property type="resolution" value="2.30 A"/>
    <property type="chains" value="A=159-296"/>
</dbReference>
<dbReference type="PDB" id="8S78">
    <property type="method" value="EM"/>
    <property type="resolution" value="2.85 A"/>
    <property type="chains" value="A=154-296"/>
</dbReference>
<dbReference type="PDB" id="8W8M">
    <property type="method" value="EM"/>
    <property type="resolution" value="3.28 A"/>
    <property type="chains" value="1A/1B/1C/1D/1E/1F/2A/2B/2C/2D/2E/2F/3A/3B/3C/3D/3E/3F/A1/A2/A3/B1/B2/B3/C1/C2/C3/D1/D2/D3=153-296"/>
</dbReference>
<dbReference type="PDBsum" id="2JS7"/>
<dbReference type="PDBsum" id="2Z5V"/>
<dbReference type="PDBsum" id="3MOP"/>
<dbReference type="PDBsum" id="4DOM"/>
<dbReference type="PDBsum" id="4EO7"/>
<dbReference type="PDBsum" id="6I3N"/>
<dbReference type="PDBsum" id="7BEQ"/>
<dbReference type="PDBsum" id="7BER"/>
<dbReference type="PDBsum" id="7L6W"/>
<dbReference type="PDBsum" id="8S78"/>
<dbReference type="PDBsum" id="8W8M"/>
<dbReference type="EMDB" id="EMD-37355"/>
<dbReference type="SMR" id="Q99836"/>
<dbReference type="BioGRID" id="110700">
    <property type="interactions" value="87"/>
</dbReference>
<dbReference type="ComplexPortal" id="CPX-10281">
    <property type="entry name" value="Myddosome core complex"/>
</dbReference>
<dbReference type="CORUM" id="Q99836"/>
<dbReference type="DIP" id="DIP-31349N"/>
<dbReference type="FunCoup" id="Q99836">
    <property type="interactions" value="1649"/>
</dbReference>
<dbReference type="IntAct" id="Q99836">
    <property type="interactions" value="48"/>
</dbReference>
<dbReference type="MINT" id="Q99836"/>
<dbReference type="STRING" id="9606.ENSP00000498321"/>
<dbReference type="BindingDB" id="Q99836"/>
<dbReference type="ChEMBL" id="CHEMBL5919"/>
<dbReference type="GlyGen" id="Q99836">
    <property type="glycosylation" value="1 site, 1 O-linked glycan (1 site)"/>
</dbReference>
<dbReference type="iPTMnet" id="Q99836"/>
<dbReference type="PhosphoSitePlus" id="Q99836"/>
<dbReference type="SwissPalm" id="Q99836"/>
<dbReference type="BioMuta" id="MYD88"/>
<dbReference type="DMDM" id="18202671"/>
<dbReference type="jPOST" id="Q99836"/>
<dbReference type="MassIVE" id="Q99836"/>
<dbReference type="PaxDb" id="9606-ENSP00000401399"/>
<dbReference type="PeptideAtlas" id="Q99836"/>
<dbReference type="ProteomicsDB" id="78500">
    <molecule id="Q99836-1"/>
</dbReference>
<dbReference type="ProteomicsDB" id="78501">
    <molecule id="Q99836-2"/>
</dbReference>
<dbReference type="ProteomicsDB" id="78502">
    <molecule id="Q99836-3"/>
</dbReference>
<dbReference type="ProteomicsDB" id="78503">
    <molecule id="Q99836-4"/>
</dbReference>
<dbReference type="Pumba" id="Q99836"/>
<dbReference type="TopDownProteomics" id="Q99836-4">
    <molecule id="Q99836-4"/>
</dbReference>
<dbReference type="Antibodypedia" id="3965">
    <property type="antibodies" value="992 antibodies from 50 providers"/>
</dbReference>
<dbReference type="DNASU" id="4615"/>
<dbReference type="Ensembl" id="ENST00000417037.8">
    <molecule id="Q99836-2"/>
    <property type="protein sequence ID" value="ENSP00000401399.4"/>
    <property type="gene ID" value="ENSG00000172936.18"/>
</dbReference>
<dbReference type="Ensembl" id="ENST00000421516.3">
    <molecule id="Q99836-6"/>
    <property type="protein sequence ID" value="ENSP00000391753.3"/>
    <property type="gene ID" value="ENSG00000172936.18"/>
</dbReference>
<dbReference type="Ensembl" id="ENST00000650112.2">
    <molecule id="Q99836-4"/>
    <property type="protein sequence ID" value="ENSP00000497991.2"/>
    <property type="gene ID" value="ENSG00000172936.18"/>
</dbReference>
<dbReference type="Ensembl" id="ENST00000650905.2">
    <molecule id="Q99836-1"/>
    <property type="protein sequence ID" value="ENSP00000498360.2"/>
    <property type="gene ID" value="ENSG00000172936.18"/>
</dbReference>
<dbReference type="Ensembl" id="ENST00000651800.2">
    <molecule id="Q99836-3"/>
    <property type="protein sequence ID" value="ENSP00000499012.2"/>
    <property type="gene ID" value="ENSG00000172936.18"/>
</dbReference>
<dbReference type="GeneID" id="4615"/>
<dbReference type="KEGG" id="hsa:4615"/>
<dbReference type="MANE-Select" id="ENST00000650905.2">
    <property type="protein sequence ID" value="ENSP00000498360.2"/>
    <property type="RefSeq nucleotide sequence ID" value="NM_002468.5"/>
    <property type="RefSeq protein sequence ID" value="NP_002459.3"/>
</dbReference>
<dbReference type="UCSC" id="uc011ayj.3">
    <molecule id="Q99836-1"/>
    <property type="organism name" value="human"/>
</dbReference>
<dbReference type="AGR" id="HGNC:7562"/>
<dbReference type="CTD" id="4615"/>
<dbReference type="DisGeNET" id="4615"/>
<dbReference type="GeneCards" id="MYD88"/>
<dbReference type="HGNC" id="HGNC:7562">
    <property type="gene designation" value="MYD88"/>
</dbReference>
<dbReference type="HPA" id="ENSG00000172936">
    <property type="expression patterns" value="Low tissue specificity"/>
</dbReference>
<dbReference type="MalaCards" id="MYD88"/>
<dbReference type="MIM" id="153600">
    <property type="type" value="phenotype"/>
</dbReference>
<dbReference type="MIM" id="602170">
    <property type="type" value="gene"/>
</dbReference>
<dbReference type="MIM" id="612260">
    <property type="type" value="phenotype"/>
</dbReference>
<dbReference type="neXtProt" id="NX_Q99836"/>
<dbReference type="OpenTargets" id="ENSG00000172936"/>
<dbReference type="Orphanet" id="70592">
    <property type="disease" value="Transient predisposition to invasive pyogenic bacterial infection"/>
</dbReference>
<dbReference type="Orphanet" id="33226">
    <property type="disease" value="Waldenstroem macroglobulinemia"/>
</dbReference>
<dbReference type="PharmGKB" id="PA31361"/>
<dbReference type="VEuPathDB" id="HostDB:ENSG00000172936"/>
<dbReference type="eggNOG" id="ENOG502QWKI">
    <property type="taxonomic scope" value="Eukaryota"/>
</dbReference>
<dbReference type="GeneTree" id="ENSGT00510000048324"/>
<dbReference type="HOGENOM" id="CLU_116540_0_0_1"/>
<dbReference type="InParanoid" id="Q99836"/>
<dbReference type="OMA" id="SNECDFQ"/>
<dbReference type="OrthoDB" id="10037120at2759"/>
<dbReference type="PAN-GO" id="Q99836">
    <property type="GO annotations" value="5 GO annotations based on evolutionary models"/>
</dbReference>
<dbReference type="PhylomeDB" id="Q99836"/>
<dbReference type="TreeFam" id="TF326264"/>
<dbReference type="PathwayCommons" id="Q99836"/>
<dbReference type="Reactome" id="R-HSA-1236974">
    <property type="pathway name" value="ER-Phagosome pathway"/>
</dbReference>
<dbReference type="Reactome" id="R-HSA-1257604">
    <property type="pathway name" value="PIP3 activates AKT signaling"/>
</dbReference>
<dbReference type="Reactome" id="R-HSA-166058">
    <property type="pathway name" value="MyD88:MAL(TIRAP) cascade initiated on plasma membrane"/>
</dbReference>
<dbReference type="Reactome" id="R-HSA-1810476">
    <property type="pathway name" value="RIP-mediated NFkB activation via ZBP1"/>
</dbReference>
<dbReference type="Reactome" id="R-HSA-209543">
    <property type="pathway name" value="p75NTR recruits signalling complexes"/>
</dbReference>
<dbReference type="Reactome" id="R-HSA-3134963">
    <property type="pathway name" value="DEx/H-box helicases activate type I IFN and inflammatory cytokines production"/>
</dbReference>
<dbReference type="Reactome" id="R-HSA-5602498">
    <property type="pathway name" value="MyD88 deficiency (TLR2/4)"/>
</dbReference>
<dbReference type="Reactome" id="R-HSA-5602680">
    <property type="pathway name" value="MyD88 deficiency (TLR5)"/>
</dbReference>
<dbReference type="Reactome" id="R-HSA-5603037">
    <property type="pathway name" value="IRAK4 deficiency (TLR5)"/>
</dbReference>
<dbReference type="Reactome" id="R-HSA-5603041">
    <property type="pathway name" value="IRAK4 deficiency (TLR2/4)"/>
</dbReference>
<dbReference type="Reactome" id="R-HSA-6811558">
    <property type="pathway name" value="PI5P, PP2A and IER3 Regulate PI3K/AKT Signaling"/>
</dbReference>
<dbReference type="Reactome" id="R-HSA-9020702">
    <property type="pathway name" value="Interleukin-1 signaling"/>
</dbReference>
<dbReference type="Reactome" id="R-HSA-975110">
    <property type="pathway name" value="TRAF6 mediated IRF7 activation in TLR7/8 or 9 signaling"/>
</dbReference>
<dbReference type="Reactome" id="R-HSA-975138">
    <property type="pathway name" value="TRAF6 mediated induction of NFkB and MAP kinases upon TLR7/8 or 9 activation"/>
</dbReference>
<dbReference type="Reactome" id="R-HSA-975155">
    <property type="pathway name" value="MyD88 dependent cascade initiated on endosome"/>
</dbReference>
<dbReference type="Reactome" id="R-HSA-975871">
    <property type="pathway name" value="MyD88 cascade initiated on plasma membrane"/>
</dbReference>
<dbReference type="SignaLink" id="Q99836"/>
<dbReference type="SIGNOR" id="Q99836"/>
<dbReference type="BioGRID-ORCS" id="4615">
    <property type="hits" value="26 hits in 1167 CRISPR screens"/>
</dbReference>
<dbReference type="ChiTaRS" id="MYD88">
    <property type="organism name" value="human"/>
</dbReference>
<dbReference type="EvolutionaryTrace" id="Q99836"/>
<dbReference type="GeneWiki" id="MYD88"/>
<dbReference type="GenomeRNAi" id="4615"/>
<dbReference type="Pharos" id="Q99836">
    <property type="development level" value="Tbio"/>
</dbReference>
<dbReference type="PRO" id="PR:Q99836"/>
<dbReference type="Proteomes" id="UP000005640">
    <property type="component" value="Chromosome 3"/>
</dbReference>
<dbReference type="RNAct" id="Q99836">
    <property type="molecule type" value="protein"/>
</dbReference>
<dbReference type="Bgee" id="ENSG00000172936">
    <property type="expression patterns" value="Expressed in leukocyte and 200 other cell types or tissues"/>
</dbReference>
<dbReference type="ExpressionAtlas" id="Q99836">
    <property type="expression patterns" value="baseline and differential"/>
</dbReference>
<dbReference type="GO" id="GO:0009986">
    <property type="term" value="C:cell surface"/>
    <property type="evidence" value="ECO:0000314"/>
    <property type="project" value="UniProt"/>
</dbReference>
<dbReference type="GO" id="GO:0005737">
    <property type="term" value="C:cytoplasm"/>
    <property type="evidence" value="ECO:0000314"/>
    <property type="project" value="AgBase"/>
</dbReference>
<dbReference type="GO" id="GO:0005829">
    <property type="term" value="C:cytosol"/>
    <property type="evidence" value="ECO:0000304"/>
    <property type="project" value="Reactome"/>
</dbReference>
<dbReference type="GO" id="GO:0010008">
    <property type="term" value="C:endosome membrane"/>
    <property type="evidence" value="ECO:0000304"/>
    <property type="project" value="Reactome"/>
</dbReference>
<dbReference type="GO" id="GO:0031234">
    <property type="term" value="C:extrinsic component of cytoplasmic side of plasma membrane"/>
    <property type="evidence" value="ECO:0000314"/>
    <property type="project" value="UniProt"/>
</dbReference>
<dbReference type="GO" id="GO:0019897">
    <property type="term" value="C:extrinsic component of plasma membrane"/>
    <property type="evidence" value="ECO:0000314"/>
    <property type="project" value="UniProt"/>
</dbReference>
<dbReference type="GO" id="GO:0005634">
    <property type="term" value="C:nucleus"/>
    <property type="evidence" value="ECO:0000314"/>
    <property type="project" value="AgBase"/>
</dbReference>
<dbReference type="GO" id="GO:0005886">
    <property type="term" value="C:plasma membrane"/>
    <property type="evidence" value="ECO:0000314"/>
    <property type="project" value="UniProt"/>
</dbReference>
<dbReference type="GO" id="GO:0032991">
    <property type="term" value="C:protein-containing complex"/>
    <property type="evidence" value="ECO:0007669"/>
    <property type="project" value="Ensembl"/>
</dbReference>
<dbReference type="GO" id="GO:0140674">
    <property type="term" value="F:ATP-dependent histone chaperone activity"/>
    <property type="evidence" value="ECO:0007669"/>
    <property type="project" value="Ensembl"/>
</dbReference>
<dbReference type="GO" id="GO:0005123">
    <property type="term" value="F:death receptor binding"/>
    <property type="evidence" value="ECO:0000304"/>
    <property type="project" value="ProtInc"/>
</dbReference>
<dbReference type="GO" id="GO:0042802">
    <property type="term" value="F:identical protein binding"/>
    <property type="evidence" value="ECO:0000353"/>
    <property type="project" value="IntAct"/>
</dbReference>
<dbReference type="GO" id="GO:0005149">
    <property type="term" value="F:interleukin-1 receptor binding"/>
    <property type="evidence" value="ECO:0007669"/>
    <property type="project" value="Ensembl"/>
</dbReference>
<dbReference type="GO" id="GO:0060090">
    <property type="term" value="F:molecular adaptor activity"/>
    <property type="evidence" value="ECO:0000314"/>
    <property type="project" value="UniProt"/>
</dbReference>
<dbReference type="GO" id="GO:0035591">
    <property type="term" value="F:signaling adaptor activity"/>
    <property type="evidence" value="ECO:0000314"/>
    <property type="project" value="UniProt"/>
</dbReference>
<dbReference type="GO" id="GO:0070976">
    <property type="term" value="F:TIR domain binding"/>
    <property type="evidence" value="ECO:0000353"/>
    <property type="project" value="BHF-UCL"/>
</dbReference>
<dbReference type="GO" id="GO:0005121">
    <property type="term" value="F:Toll binding"/>
    <property type="evidence" value="ECO:0007669"/>
    <property type="project" value="Ensembl"/>
</dbReference>
<dbReference type="GO" id="GO:0035325">
    <property type="term" value="F:Toll-like receptor binding"/>
    <property type="evidence" value="ECO:0000318"/>
    <property type="project" value="GO_Central"/>
</dbReference>
<dbReference type="GO" id="GO:0070935">
    <property type="term" value="P:3'-UTR-mediated mRNA stabilization"/>
    <property type="evidence" value="ECO:0000314"/>
    <property type="project" value="BHF-UCL"/>
</dbReference>
<dbReference type="GO" id="GO:0006915">
    <property type="term" value="P:apoptotic process"/>
    <property type="evidence" value="ECO:0000315"/>
    <property type="project" value="AgBase"/>
</dbReference>
<dbReference type="GO" id="GO:0007166">
    <property type="term" value="P:cell surface receptor signaling pathway"/>
    <property type="evidence" value="ECO:0000304"/>
    <property type="project" value="ProtInc"/>
</dbReference>
<dbReference type="GO" id="GO:0071222">
    <property type="term" value="P:cellular response to lipopolysaccharide"/>
    <property type="evidence" value="ECO:0000250"/>
    <property type="project" value="ARUK-UCL"/>
</dbReference>
<dbReference type="GO" id="GO:0071260">
    <property type="term" value="P:cellular response to mechanical stimulus"/>
    <property type="evidence" value="ECO:0000270"/>
    <property type="project" value="UniProtKB"/>
</dbReference>
<dbReference type="GO" id="GO:0140052">
    <property type="term" value="P:cellular response to oxidised low-density lipoprotein particle stimulus"/>
    <property type="evidence" value="ECO:0000250"/>
    <property type="project" value="ARUK-UCL"/>
</dbReference>
<dbReference type="GO" id="GO:0042742">
    <property type="term" value="P:defense response to bacterium"/>
    <property type="evidence" value="ECO:0000315"/>
    <property type="project" value="BHF-UCL"/>
</dbReference>
<dbReference type="GO" id="GO:0050830">
    <property type="term" value="P:defense response to Gram-positive bacterium"/>
    <property type="evidence" value="ECO:0000250"/>
    <property type="project" value="UniProtKB"/>
</dbReference>
<dbReference type="GO" id="GO:0042832">
    <property type="term" value="P:defense response to protozoan"/>
    <property type="evidence" value="ECO:0000250"/>
    <property type="project" value="ARUK-UCL"/>
</dbReference>
<dbReference type="GO" id="GO:0051607">
    <property type="term" value="P:defense response to virus"/>
    <property type="evidence" value="ECO:0000314"/>
    <property type="project" value="UniProtKB"/>
</dbReference>
<dbReference type="GO" id="GO:0090557">
    <property type="term" value="P:establishment of endothelial intestinal barrier"/>
    <property type="evidence" value="ECO:0007669"/>
    <property type="project" value="Ensembl"/>
</dbReference>
<dbReference type="GO" id="GO:0010467">
    <property type="term" value="P:gene expression"/>
    <property type="evidence" value="ECO:0007669"/>
    <property type="project" value="Ensembl"/>
</dbReference>
<dbReference type="GO" id="GO:0016064">
    <property type="term" value="P:immunoglobulin mediated immune response"/>
    <property type="evidence" value="ECO:0007669"/>
    <property type="project" value="Ensembl"/>
</dbReference>
<dbReference type="GO" id="GO:0009682">
    <property type="term" value="P:induced systemic resistance"/>
    <property type="evidence" value="ECO:0007669"/>
    <property type="project" value="Ensembl"/>
</dbReference>
<dbReference type="GO" id="GO:0045087">
    <property type="term" value="P:innate immune response"/>
    <property type="evidence" value="ECO:0000318"/>
    <property type="project" value="GO_Central"/>
</dbReference>
<dbReference type="GO" id="GO:0070498">
    <property type="term" value="P:interleukin-1-mediated signaling pathway"/>
    <property type="evidence" value="ECO:0000314"/>
    <property type="project" value="UniProt"/>
</dbReference>
<dbReference type="GO" id="GO:0038172">
    <property type="term" value="P:interleukin-33-mediated signaling pathway"/>
    <property type="evidence" value="ECO:0000314"/>
    <property type="project" value="UniProt"/>
</dbReference>
<dbReference type="GO" id="GO:0007254">
    <property type="term" value="P:JNK cascade"/>
    <property type="evidence" value="ECO:0007669"/>
    <property type="project" value="Ensembl"/>
</dbReference>
<dbReference type="GO" id="GO:0002269">
    <property type="term" value="P:leukocyte activation involved in inflammatory response"/>
    <property type="evidence" value="ECO:0007669"/>
    <property type="project" value="Ensembl"/>
</dbReference>
<dbReference type="GO" id="GO:0031663">
    <property type="term" value="P:lipopolysaccharide-mediated signaling pathway"/>
    <property type="evidence" value="ECO:0007669"/>
    <property type="project" value="Ensembl"/>
</dbReference>
<dbReference type="GO" id="GO:0014004">
    <property type="term" value="P:microglia differentiation"/>
    <property type="evidence" value="ECO:0007669"/>
    <property type="project" value="Ensembl"/>
</dbReference>
<dbReference type="GO" id="GO:0002755">
    <property type="term" value="P:MyD88-dependent toll-like receptor signaling pathway"/>
    <property type="evidence" value="ECO:0007669"/>
    <property type="project" value="Ensembl"/>
</dbReference>
<dbReference type="GO" id="GO:0002283">
    <property type="term" value="P:neutrophil activation involved in immune response"/>
    <property type="evidence" value="ECO:0007669"/>
    <property type="project" value="Ensembl"/>
</dbReference>
<dbReference type="GO" id="GO:0070944">
    <property type="term" value="P:neutrophil-mediated killing of bacterium"/>
    <property type="evidence" value="ECO:0007669"/>
    <property type="project" value="Ensembl"/>
</dbReference>
<dbReference type="GO" id="GO:0006909">
    <property type="term" value="P:phagocytosis"/>
    <property type="evidence" value="ECO:0000315"/>
    <property type="project" value="UniProtKB"/>
</dbReference>
<dbReference type="GO" id="GO:0043123">
    <property type="term" value="P:positive regulation of canonical NF-kappaB signal transduction"/>
    <property type="evidence" value="ECO:0000270"/>
    <property type="project" value="UniProtKB"/>
</dbReference>
<dbReference type="GO" id="GO:0032722">
    <property type="term" value="P:positive regulation of chemokine production"/>
    <property type="evidence" value="ECO:0007669"/>
    <property type="project" value="Ensembl"/>
</dbReference>
<dbReference type="GO" id="GO:1900017">
    <property type="term" value="P:positive regulation of cytokine production involved in inflammatory response"/>
    <property type="evidence" value="ECO:0000315"/>
    <property type="project" value="BHF-UCL"/>
</dbReference>
<dbReference type="GO" id="GO:0010628">
    <property type="term" value="P:positive regulation of gene expression"/>
    <property type="evidence" value="ECO:0000250"/>
    <property type="project" value="ARUK-UCL"/>
</dbReference>
<dbReference type="GO" id="GO:0032731">
    <property type="term" value="P:positive regulation of interleukin-1 beta production"/>
    <property type="evidence" value="ECO:0000314"/>
    <property type="project" value="UniProtKB"/>
</dbReference>
<dbReference type="GO" id="GO:0032740">
    <property type="term" value="P:positive regulation of interleukin-17 production"/>
    <property type="evidence" value="ECO:0000250"/>
    <property type="project" value="BHF-UCL"/>
</dbReference>
<dbReference type="GO" id="GO:0032747">
    <property type="term" value="P:positive regulation of interleukin-23 production"/>
    <property type="evidence" value="ECO:0000250"/>
    <property type="project" value="BHF-UCL"/>
</dbReference>
<dbReference type="GO" id="GO:0032755">
    <property type="term" value="P:positive regulation of interleukin-6 production"/>
    <property type="evidence" value="ECO:0000250"/>
    <property type="project" value="BHF-UCL"/>
</dbReference>
<dbReference type="GO" id="GO:0032757">
    <property type="term" value="P:positive regulation of interleukin-8 production"/>
    <property type="evidence" value="ECO:0000315"/>
    <property type="project" value="BHF-UCL"/>
</dbReference>
<dbReference type="GO" id="GO:0046330">
    <property type="term" value="P:positive regulation of JNK cascade"/>
    <property type="evidence" value="ECO:0007669"/>
    <property type="project" value="Ensembl"/>
</dbReference>
<dbReference type="GO" id="GO:0050671">
    <property type="term" value="P:positive regulation of lymphocyte proliferation"/>
    <property type="evidence" value="ECO:0007669"/>
    <property type="project" value="Ensembl"/>
</dbReference>
<dbReference type="GO" id="GO:0060907">
    <property type="term" value="P:positive regulation of macrophage cytokine production"/>
    <property type="evidence" value="ECO:0007669"/>
    <property type="project" value="Ensembl"/>
</dbReference>
<dbReference type="GO" id="GO:0051092">
    <property type="term" value="P:positive regulation of NF-kappaB transcription factor activity"/>
    <property type="evidence" value="ECO:0000315"/>
    <property type="project" value="AgBase"/>
</dbReference>
<dbReference type="GO" id="GO:1900227">
    <property type="term" value="P:positive regulation of NLRP3 inflammasome complex assembly"/>
    <property type="evidence" value="ECO:0000315"/>
    <property type="project" value="UniProtKB"/>
</dbReference>
<dbReference type="GO" id="GO:0048661">
    <property type="term" value="P:positive regulation of smooth muscle cell proliferation"/>
    <property type="evidence" value="ECO:0007669"/>
    <property type="project" value="Ensembl"/>
</dbReference>
<dbReference type="GO" id="GO:0045944">
    <property type="term" value="P:positive regulation of transcription by RNA polymerase II"/>
    <property type="evidence" value="ECO:0007669"/>
    <property type="project" value="Ensembl"/>
</dbReference>
<dbReference type="GO" id="GO:0032760">
    <property type="term" value="P:positive regulation of tumor necrosis factor production"/>
    <property type="evidence" value="ECO:0007669"/>
    <property type="project" value="Ensembl"/>
</dbReference>
<dbReference type="GO" id="GO:0032481">
    <property type="term" value="P:positive regulation of type I interferon production"/>
    <property type="evidence" value="ECO:0000315"/>
    <property type="project" value="BHF-UCL"/>
</dbReference>
<dbReference type="GO" id="GO:2000338">
    <property type="term" value="P:regulation of chemokine (C-X-C motif) ligand 1 production"/>
    <property type="evidence" value="ECO:0007669"/>
    <property type="project" value="Ensembl"/>
</dbReference>
<dbReference type="GO" id="GO:2000341">
    <property type="term" value="P:regulation of chemokine (C-X-C motif) ligand 2 production"/>
    <property type="evidence" value="ECO:0007669"/>
    <property type="project" value="Ensembl"/>
</dbReference>
<dbReference type="GO" id="GO:0050727">
    <property type="term" value="P:regulation of inflammatory response"/>
    <property type="evidence" value="ECO:0000250"/>
    <property type="project" value="BHF-UCL"/>
</dbReference>
<dbReference type="GO" id="GO:1902622">
    <property type="term" value="P:regulation of neutrophil migration"/>
    <property type="evidence" value="ECO:0007669"/>
    <property type="project" value="Ensembl"/>
</dbReference>
<dbReference type="GO" id="GO:0014075">
    <property type="term" value="P:response to amine"/>
    <property type="evidence" value="ECO:0007669"/>
    <property type="project" value="Ensembl"/>
</dbReference>
<dbReference type="GO" id="GO:0043200">
    <property type="term" value="P:response to amino acid"/>
    <property type="evidence" value="ECO:0007669"/>
    <property type="project" value="Ensembl"/>
</dbReference>
<dbReference type="GO" id="GO:0045471">
    <property type="term" value="P:response to ethanol"/>
    <property type="evidence" value="ECO:0007669"/>
    <property type="project" value="Ensembl"/>
</dbReference>
<dbReference type="GO" id="GO:0070555">
    <property type="term" value="P:response to interleukin-1"/>
    <property type="evidence" value="ECO:0000315"/>
    <property type="project" value="BHF-UCL"/>
</dbReference>
<dbReference type="GO" id="GO:0002238">
    <property type="term" value="P:response to molecule of fungal origin"/>
    <property type="evidence" value="ECO:0007669"/>
    <property type="project" value="Ensembl"/>
</dbReference>
<dbReference type="GO" id="GO:0032494">
    <property type="term" value="P:response to peptidoglycan"/>
    <property type="evidence" value="ECO:0007669"/>
    <property type="project" value="Ensembl"/>
</dbReference>
<dbReference type="GO" id="GO:0007165">
    <property type="term" value="P:signal transduction"/>
    <property type="evidence" value="ECO:0000303"/>
    <property type="project" value="ProtInc"/>
</dbReference>
<dbReference type="GO" id="GO:0043588">
    <property type="term" value="P:skin development"/>
    <property type="evidence" value="ECO:0007669"/>
    <property type="project" value="Ensembl"/>
</dbReference>
<dbReference type="GO" id="GO:0008063">
    <property type="term" value="P:Toll signaling pathway"/>
    <property type="evidence" value="ECO:0000318"/>
    <property type="project" value="GO_Central"/>
</dbReference>
<dbReference type="GO" id="GO:0034142">
    <property type="term" value="P:toll-like receptor 4 signaling pathway"/>
    <property type="evidence" value="ECO:0000314"/>
    <property type="project" value="UniProt"/>
</dbReference>
<dbReference type="GO" id="GO:0034146">
    <property type="term" value="P:toll-like receptor 5 signaling pathway"/>
    <property type="evidence" value="ECO:0000314"/>
    <property type="project" value="UniProt"/>
</dbReference>
<dbReference type="GO" id="GO:0034158">
    <property type="term" value="P:toll-like receptor 8 signaling pathway"/>
    <property type="evidence" value="ECO:0000314"/>
    <property type="project" value="UniProtKB"/>
</dbReference>
<dbReference type="GO" id="GO:0038124">
    <property type="term" value="P:toll-like receptor TLR6:TLR2 signaling pathway"/>
    <property type="evidence" value="ECO:0000314"/>
    <property type="project" value="UniProt"/>
</dbReference>
<dbReference type="GO" id="GO:0060337">
    <property type="term" value="P:type I interferon-mediated signaling pathway"/>
    <property type="evidence" value="ECO:0000315"/>
    <property type="project" value="BHF-UCL"/>
</dbReference>
<dbReference type="CDD" id="cd08312">
    <property type="entry name" value="Death_MyD88"/>
    <property type="match status" value="1"/>
</dbReference>
<dbReference type="FunFam" id="1.10.533.10:FF:000029">
    <property type="entry name" value="Myeloid differentiation primary response protein MyD88"/>
    <property type="match status" value="1"/>
</dbReference>
<dbReference type="FunFam" id="3.40.50.10140:FF:000005">
    <property type="entry name" value="Myeloid differentiation primary response protein MyD88"/>
    <property type="match status" value="1"/>
</dbReference>
<dbReference type="Gene3D" id="1.10.533.10">
    <property type="entry name" value="Death Domain, Fas"/>
    <property type="match status" value="1"/>
</dbReference>
<dbReference type="Gene3D" id="3.40.50.10140">
    <property type="entry name" value="Toll/interleukin-1 receptor homology (TIR) domain"/>
    <property type="match status" value="1"/>
</dbReference>
<dbReference type="InterPro" id="IPR011029">
    <property type="entry name" value="DEATH-like_dom_sf"/>
</dbReference>
<dbReference type="InterPro" id="IPR000488">
    <property type="entry name" value="Death_dom"/>
</dbReference>
<dbReference type="InterPro" id="IPR034249">
    <property type="entry name" value="MyD88_Death"/>
</dbReference>
<dbReference type="InterPro" id="IPR017281">
    <property type="entry name" value="Myelin_different_resp_MyD88"/>
</dbReference>
<dbReference type="InterPro" id="IPR000157">
    <property type="entry name" value="TIR_dom"/>
</dbReference>
<dbReference type="InterPro" id="IPR035897">
    <property type="entry name" value="Toll_tir_struct_dom_sf"/>
</dbReference>
<dbReference type="PANTHER" id="PTHR15079">
    <property type="entry name" value="MYD88"/>
    <property type="match status" value="1"/>
</dbReference>
<dbReference type="PANTHER" id="PTHR15079:SF12">
    <property type="entry name" value="MYELOID DIFFERENTIATION PRIMARY RESPONSE PROTEIN MYD88"/>
    <property type="match status" value="1"/>
</dbReference>
<dbReference type="Pfam" id="PF00531">
    <property type="entry name" value="Death"/>
    <property type="match status" value="1"/>
</dbReference>
<dbReference type="Pfam" id="PF13676">
    <property type="entry name" value="TIR_2"/>
    <property type="match status" value="1"/>
</dbReference>
<dbReference type="PIRSF" id="PIRSF037756">
    <property type="entry name" value="MyD88"/>
    <property type="match status" value="1"/>
</dbReference>
<dbReference type="SMART" id="SM00005">
    <property type="entry name" value="DEATH"/>
    <property type="match status" value="1"/>
</dbReference>
<dbReference type="SMART" id="SM00255">
    <property type="entry name" value="TIR"/>
    <property type="match status" value="1"/>
</dbReference>
<dbReference type="SUPFAM" id="SSF47986">
    <property type="entry name" value="DEATH domain"/>
    <property type="match status" value="1"/>
</dbReference>
<dbReference type="SUPFAM" id="SSF52200">
    <property type="entry name" value="Toll/Interleukin receptor TIR domain"/>
    <property type="match status" value="1"/>
</dbReference>
<dbReference type="PROSITE" id="PS50017">
    <property type="entry name" value="DEATH_DOMAIN"/>
    <property type="match status" value="1"/>
</dbReference>
<dbReference type="PROSITE" id="PS50104">
    <property type="entry name" value="TIR"/>
    <property type="match status" value="1"/>
</dbReference>
<reference key="1">
    <citation type="journal article" date="1996" name="Oncogene">
        <title>Molecular characterization and modular analysis of human MyD88.</title>
        <authorList>
            <person name="Hardiman G."/>
            <person name="Rock F.L."/>
            <person name="Balasubramanian S."/>
            <person name="Kastelein R.A."/>
            <person name="Bazan J.F."/>
        </authorList>
    </citation>
    <scope>NUCLEOTIDE SEQUENCE [MRNA] (ISOFORM 1)</scope>
    <scope>TISSUE SPECIFICITY</scope>
    <scope>VARIANT CYS-98</scope>
    <source>
        <tissue>Dendritic cell</tissue>
    </source>
</reference>
<reference key="2">
    <citation type="journal article" date="1997" name="FEBS Lett.">
        <title>The cloning and characterization of human MyD88: a member of an IL-1 receptor related family.</title>
        <authorList>
            <person name="Bonnert T.P."/>
            <person name="Garka K.E."/>
            <person name="Parnet P."/>
            <person name="Sonoda G."/>
            <person name="Testa J.R."/>
            <person name="Sims J.E."/>
        </authorList>
    </citation>
    <scope>NUCLEOTIDE SEQUENCE [MRNA] (ISOFORM 1)</scope>
    <scope>FUNCTION</scope>
    <source>
        <tissue>Epidermal carcinoma</tissue>
    </source>
</reference>
<reference key="3">
    <citation type="journal article" date="2008" name="Immunogenetics">
        <title>Natural selection in the TLR-related genes in the course of primate evolution.</title>
        <authorList>
            <person name="Nakajima T."/>
            <person name="Ohtani H."/>
            <person name="Satta Y."/>
            <person name="Uno Y."/>
            <person name="Akari H."/>
            <person name="Ishida T."/>
            <person name="Kimura A."/>
        </authorList>
    </citation>
    <scope>NUCLEOTIDE SEQUENCE [MRNA] (ISOFORM 1)</scope>
</reference>
<reference key="4">
    <citation type="submission" date="2003-05" db="EMBL/GenBank/DDBJ databases">
        <title>Cloning of human full-length CDSs in BD Creator(TM) system donor vector.</title>
        <authorList>
            <person name="Kalnine N."/>
            <person name="Chen X."/>
            <person name="Rolfs A."/>
            <person name="Halleck A."/>
            <person name="Hines L."/>
            <person name="Eisenstein S."/>
            <person name="Koundinya M."/>
            <person name="Raphael J."/>
            <person name="Moreira D."/>
            <person name="Kelley T."/>
            <person name="LaBaer J."/>
            <person name="Lin Y."/>
            <person name="Phelan M."/>
            <person name="Farmer A."/>
        </authorList>
    </citation>
    <scope>NUCLEOTIDE SEQUENCE [LARGE SCALE MRNA] (ISOFORM 1)</scope>
</reference>
<reference key="5">
    <citation type="journal article" date="2004" name="Nat. Genet.">
        <title>Complete sequencing and characterization of 21,243 full-length human cDNAs.</title>
        <authorList>
            <person name="Ota T."/>
            <person name="Suzuki Y."/>
            <person name="Nishikawa T."/>
            <person name="Otsuki T."/>
            <person name="Sugiyama T."/>
            <person name="Irie R."/>
            <person name="Wakamatsu A."/>
            <person name="Hayashi K."/>
            <person name="Sato H."/>
            <person name="Nagai K."/>
            <person name="Kimura K."/>
            <person name="Makita H."/>
            <person name="Sekine M."/>
            <person name="Obayashi M."/>
            <person name="Nishi T."/>
            <person name="Shibahara T."/>
            <person name="Tanaka T."/>
            <person name="Ishii S."/>
            <person name="Yamamoto J."/>
            <person name="Saito K."/>
            <person name="Kawai Y."/>
            <person name="Isono Y."/>
            <person name="Nakamura Y."/>
            <person name="Nagahari K."/>
            <person name="Murakami K."/>
            <person name="Yasuda T."/>
            <person name="Iwayanagi T."/>
            <person name="Wagatsuma M."/>
            <person name="Shiratori A."/>
            <person name="Sudo H."/>
            <person name="Hosoiri T."/>
            <person name="Kaku Y."/>
            <person name="Kodaira H."/>
            <person name="Kondo H."/>
            <person name="Sugawara M."/>
            <person name="Takahashi M."/>
            <person name="Kanda K."/>
            <person name="Yokoi T."/>
            <person name="Furuya T."/>
            <person name="Kikkawa E."/>
            <person name="Omura Y."/>
            <person name="Abe K."/>
            <person name="Kamihara K."/>
            <person name="Katsuta N."/>
            <person name="Sato K."/>
            <person name="Tanikawa M."/>
            <person name="Yamazaki M."/>
            <person name="Ninomiya K."/>
            <person name="Ishibashi T."/>
            <person name="Yamashita H."/>
            <person name="Murakawa K."/>
            <person name="Fujimori K."/>
            <person name="Tanai H."/>
            <person name="Kimata M."/>
            <person name="Watanabe M."/>
            <person name="Hiraoka S."/>
            <person name="Chiba Y."/>
            <person name="Ishida S."/>
            <person name="Ono Y."/>
            <person name="Takiguchi S."/>
            <person name="Watanabe S."/>
            <person name="Yosida M."/>
            <person name="Hotuta T."/>
            <person name="Kusano J."/>
            <person name="Kanehori K."/>
            <person name="Takahashi-Fujii A."/>
            <person name="Hara H."/>
            <person name="Tanase T.-O."/>
            <person name="Nomura Y."/>
            <person name="Togiya S."/>
            <person name="Komai F."/>
            <person name="Hara R."/>
            <person name="Takeuchi K."/>
            <person name="Arita M."/>
            <person name="Imose N."/>
            <person name="Musashino K."/>
            <person name="Yuuki H."/>
            <person name="Oshima A."/>
            <person name="Sasaki N."/>
            <person name="Aotsuka S."/>
            <person name="Yoshikawa Y."/>
            <person name="Matsunawa H."/>
            <person name="Ichihara T."/>
            <person name="Shiohata N."/>
            <person name="Sano S."/>
            <person name="Moriya S."/>
            <person name="Momiyama H."/>
            <person name="Satoh N."/>
            <person name="Takami S."/>
            <person name="Terashima Y."/>
            <person name="Suzuki O."/>
            <person name="Nakagawa S."/>
            <person name="Senoh A."/>
            <person name="Mizoguchi H."/>
            <person name="Goto Y."/>
            <person name="Shimizu F."/>
            <person name="Wakebe H."/>
            <person name="Hishigaki H."/>
            <person name="Watanabe T."/>
            <person name="Sugiyama A."/>
            <person name="Takemoto M."/>
            <person name="Kawakami B."/>
            <person name="Yamazaki M."/>
            <person name="Watanabe K."/>
            <person name="Kumagai A."/>
            <person name="Itakura S."/>
            <person name="Fukuzumi Y."/>
            <person name="Fujimori Y."/>
            <person name="Komiyama M."/>
            <person name="Tashiro H."/>
            <person name="Tanigami A."/>
            <person name="Fujiwara T."/>
            <person name="Ono T."/>
            <person name="Yamada K."/>
            <person name="Fujii Y."/>
            <person name="Ozaki K."/>
            <person name="Hirao M."/>
            <person name="Ohmori Y."/>
            <person name="Kawabata A."/>
            <person name="Hikiji T."/>
            <person name="Kobatake N."/>
            <person name="Inagaki H."/>
            <person name="Ikema Y."/>
            <person name="Okamoto S."/>
            <person name="Okitani R."/>
            <person name="Kawakami T."/>
            <person name="Noguchi S."/>
            <person name="Itoh T."/>
            <person name="Shigeta K."/>
            <person name="Senba T."/>
            <person name="Matsumura K."/>
            <person name="Nakajima Y."/>
            <person name="Mizuno T."/>
            <person name="Morinaga M."/>
            <person name="Sasaki M."/>
            <person name="Togashi T."/>
            <person name="Oyama M."/>
            <person name="Hata H."/>
            <person name="Watanabe M."/>
            <person name="Komatsu T."/>
            <person name="Mizushima-Sugano J."/>
            <person name="Satoh T."/>
            <person name="Shirai Y."/>
            <person name="Takahashi Y."/>
            <person name="Nakagawa K."/>
            <person name="Okumura K."/>
            <person name="Nagase T."/>
            <person name="Nomura N."/>
            <person name="Kikuchi H."/>
            <person name="Masuho Y."/>
            <person name="Yamashita R."/>
            <person name="Nakai K."/>
            <person name="Yada T."/>
            <person name="Nakamura Y."/>
            <person name="Ohara O."/>
            <person name="Isogai T."/>
            <person name="Sugano S."/>
        </authorList>
    </citation>
    <scope>NUCLEOTIDE SEQUENCE [LARGE SCALE MRNA] (ISOFORMS 2; 3; 4 AND 5)</scope>
    <source>
        <tissue>Umbilical cord blood</tissue>
    </source>
</reference>
<reference key="6">
    <citation type="journal article" date="2006" name="Nature">
        <title>The DNA sequence, annotation and analysis of human chromosome 3.</title>
        <authorList>
            <person name="Muzny D.M."/>
            <person name="Scherer S.E."/>
            <person name="Kaul R."/>
            <person name="Wang J."/>
            <person name="Yu J."/>
            <person name="Sudbrak R."/>
            <person name="Buhay C.J."/>
            <person name="Chen R."/>
            <person name="Cree A."/>
            <person name="Ding Y."/>
            <person name="Dugan-Rocha S."/>
            <person name="Gill R."/>
            <person name="Gunaratne P."/>
            <person name="Harris R.A."/>
            <person name="Hawes A.C."/>
            <person name="Hernandez J."/>
            <person name="Hodgson A.V."/>
            <person name="Hume J."/>
            <person name="Jackson A."/>
            <person name="Khan Z.M."/>
            <person name="Kovar-Smith C."/>
            <person name="Lewis L.R."/>
            <person name="Lozado R.J."/>
            <person name="Metzker M.L."/>
            <person name="Milosavljevic A."/>
            <person name="Miner G.R."/>
            <person name="Morgan M.B."/>
            <person name="Nazareth L.V."/>
            <person name="Scott G."/>
            <person name="Sodergren E."/>
            <person name="Song X.-Z."/>
            <person name="Steffen D."/>
            <person name="Wei S."/>
            <person name="Wheeler D.A."/>
            <person name="Wright M.W."/>
            <person name="Worley K.C."/>
            <person name="Yuan Y."/>
            <person name="Zhang Z."/>
            <person name="Adams C.Q."/>
            <person name="Ansari-Lari M.A."/>
            <person name="Ayele M."/>
            <person name="Brown M.J."/>
            <person name="Chen G."/>
            <person name="Chen Z."/>
            <person name="Clendenning J."/>
            <person name="Clerc-Blankenburg K.P."/>
            <person name="Chen R."/>
            <person name="Chen Z."/>
            <person name="Davis C."/>
            <person name="Delgado O."/>
            <person name="Dinh H.H."/>
            <person name="Dong W."/>
            <person name="Draper H."/>
            <person name="Ernst S."/>
            <person name="Fu G."/>
            <person name="Gonzalez-Garay M.L."/>
            <person name="Garcia D.K."/>
            <person name="Gillett W."/>
            <person name="Gu J."/>
            <person name="Hao B."/>
            <person name="Haugen E."/>
            <person name="Havlak P."/>
            <person name="He X."/>
            <person name="Hennig S."/>
            <person name="Hu S."/>
            <person name="Huang W."/>
            <person name="Jackson L.R."/>
            <person name="Jacob L.S."/>
            <person name="Kelly S.H."/>
            <person name="Kube M."/>
            <person name="Levy R."/>
            <person name="Li Z."/>
            <person name="Liu B."/>
            <person name="Liu J."/>
            <person name="Liu W."/>
            <person name="Lu J."/>
            <person name="Maheshwari M."/>
            <person name="Nguyen B.-V."/>
            <person name="Okwuonu G.O."/>
            <person name="Palmeiri A."/>
            <person name="Pasternak S."/>
            <person name="Perez L.M."/>
            <person name="Phelps K.A."/>
            <person name="Plopper F.J."/>
            <person name="Qiang B."/>
            <person name="Raymond C."/>
            <person name="Rodriguez R."/>
            <person name="Saenphimmachak C."/>
            <person name="Santibanez J."/>
            <person name="Shen H."/>
            <person name="Shen Y."/>
            <person name="Subramanian S."/>
            <person name="Tabor P.E."/>
            <person name="Verduzco D."/>
            <person name="Waldron L."/>
            <person name="Wang J."/>
            <person name="Wang J."/>
            <person name="Wang Q."/>
            <person name="Williams G.A."/>
            <person name="Wong G.K.-S."/>
            <person name="Yao Z."/>
            <person name="Zhang J."/>
            <person name="Zhang X."/>
            <person name="Zhao G."/>
            <person name="Zhou J."/>
            <person name="Zhou Y."/>
            <person name="Nelson D."/>
            <person name="Lehrach H."/>
            <person name="Reinhardt R."/>
            <person name="Naylor S.L."/>
            <person name="Yang H."/>
            <person name="Olson M."/>
            <person name="Weinstock G."/>
            <person name="Gibbs R.A."/>
        </authorList>
    </citation>
    <scope>NUCLEOTIDE SEQUENCE [LARGE SCALE GENOMIC DNA]</scope>
</reference>
<reference key="7">
    <citation type="submission" date="2005-07" db="EMBL/GenBank/DDBJ databases">
        <authorList>
            <person name="Mural R.J."/>
            <person name="Istrail S."/>
            <person name="Sutton G.G."/>
            <person name="Florea L."/>
            <person name="Halpern A.L."/>
            <person name="Mobarry C.M."/>
            <person name="Lippert R."/>
            <person name="Walenz B."/>
            <person name="Shatkay H."/>
            <person name="Dew I."/>
            <person name="Miller J.R."/>
            <person name="Flanigan M.J."/>
            <person name="Edwards N.J."/>
            <person name="Bolanos R."/>
            <person name="Fasulo D."/>
            <person name="Halldorsson B.V."/>
            <person name="Hannenhalli S."/>
            <person name="Turner R."/>
            <person name="Yooseph S."/>
            <person name="Lu F."/>
            <person name="Nusskern D.R."/>
            <person name="Shue B.C."/>
            <person name="Zheng X.H."/>
            <person name="Zhong F."/>
            <person name="Delcher A.L."/>
            <person name="Huson D.H."/>
            <person name="Kravitz S.A."/>
            <person name="Mouchard L."/>
            <person name="Reinert K."/>
            <person name="Remington K.A."/>
            <person name="Clark A.G."/>
            <person name="Waterman M.S."/>
            <person name="Eichler E.E."/>
            <person name="Adams M.D."/>
            <person name="Hunkapiller M.W."/>
            <person name="Myers E.W."/>
            <person name="Venter J.C."/>
        </authorList>
    </citation>
    <scope>NUCLEOTIDE SEQUENCE [LARGE SCALE GENOMIC DNA]</scope>
</reference>
<reference key="8">
    <citation type="journal article" date="2004" name="Genome Res.">
        <title>The status, quality, and expansion of the NIH full-length cDNA project: the Mammalian Gene Collection (MGC).</title>
        <authorList>
            <consortium name="The MGC Project Team"/>
        </authorList>
    </citation>
    <scope>NUCLEOTIDE SEQUENCE [LARGE SCALE MRNA] (ISOFORM 1)</scope>
    <scope>NUCLEOTIDE SEQUENCE [MRNA] OF 190-224 (ISOFORM 6)</scope>
    <source>
        <tissue>Pancreas</tissue>
    </source>
</reference>
<reference key="9">
    <citation type="journal article" date="2004" name="Nat. Immunol.">
        <title>Interferon-alpha induction through Toll-like receptors involves a direct interaction of IRF7 with MyD88 and TRAF6.</title>
        <authorList>
            <person name="Kawai T."/>
            <person name="Sato S."/>
            <person name="Ishii K.J."/>
            <person name="Coban C."/>
            <person name="Hemmi H."/>
            <person name="Yamamoto M."/>
            <person name="Terai K."/>
            <person name="Matsuda M."/>
            <person name="Inoue J."/>
            <person name="Uematsu S."/>
            <person name="Takeuchi O."/>
            <person name="Akira S."/>
        </authorList>
    </citation>
    <scope>FUNCTION</scope>
    <scope>SUBCELLULAR LOCATION</scope>
    <scope>INTERACTION WITH IRF7</scope>
</reference>
<reference key="10">
    <citation type="journal article" date="2004" name="Proc. Natl. Acad. Sci. U.S.A.">
        <title>Role of a transductional-transcriptional processor complex involving MyD88 and IRF-7 in Toll-like receptor signaling.</title>
        <authorList>
            <person name="Honda K."/>
            <person name="Yanai H."/>
            <person name="Mizutani T."/>
            <person name="Negishi H."/>
            <person name="Shimada N."/>
            <person name="Suzuki N."/>
            <person name="Ohba Y."/>
            <person name="Takaoka A."/>
            <person name="Yeh W.C."/>
            <person name="Taniguchi T."/>
        </authorList>
    </citation>
    <scope>SUBCELLULAR LOCATION</scope>
    <scope>INTERACTION WITH IRF7</scope>
</reference>
<reference key="11">
    <citation type="journal article" date="2005" name="Immunity">
        <title>IL-33, an interleukin-1-like cytokine that signals via the IL-1 receptor-related protein ST 2 and induces T helper type 2-associated cytokines.</title>
        <authorList>
            <person name="Schmitz J."/>
            <person name="Owyang A."/>
            <person name="Oldham E."/>
            <person name="Song Y."/>
            <person name="Murphy E."/>
            <person name="McClanahan T.K."/>
            <person name="Zurawski G."/>
            <person name="Moshrefi M."/>
            <person name="Qin J."/>
            <person name="Li X."/>
            <person name="Gorman D.M."/>
            <person name="Bazan J.F."/>
            <person name="Kastelein R.A."/>
        </authorList>
    </citation>
    <scope>INTERACTION WITH IL1RL1</scope>
</reference>
<reference key="12">
    <citation type="journal article" date="2006" name="Nat. Immunol.">
        <title>Smad6 negatively regulates interleukin 1-receptor-Toll-like receptor signaling through direct interaction with the adapter Pellino-1.</title>
        <authorList>
            <person name="Choi K.C."/>
            <person name="Lee Y.S."/>
            <person name="Lim S."/>
            <person name="Choi H.K."/>
            <person name="Lee C.H."/>
            <person name="Lee E.K."/>
            <person name="Hong S."/>
            <person name="Kim I.H."/>
            <person name="Kim S.J."/>
            <person name="Park S.H."/>
        </authorList>
    </citation>
    <scope>IDENTIFICATION IN COMPLEX WITH IRAK1; IRAK4; TRAF6 AND PELI1</scope>
</reference>
<reference key="13">
    <citation type="journal article" date="2007" name="Nat. Genet.">
        <title>A Mal functional variant is associated with protection against invasive pneumococcal disease, bacteremia, malaria and tuberculosis.</title>
        <authorList>
            <person name="Khor C.C."/>
            <person name="Chapman S.J."/>
            <person name="Vannberg F.O."/>
            <person name="Dunne A."/>
            <person name="Murphy C."/>
            <person name="Ling E.Y."/>
            <person name="Frodsham A.J."/>
            <person name="Walley A.J."/>
            <person name="Kyrieleis O."/>
            <person name="Khan A."/>
            <person name="Aucan C."/>
            <person name="Segal S."/>
            <person name="Moore C.E."/>
            <person name="Knox K."/>
            <person name="Campbell S.J."/>
            <person name="Lienhardt C."/>
            <person name="Scott A."/>
            <person name="Aaby P."/>
            <person name="Sow O.Y."/>
            <person name="Grignani R.T."/>
            <person name="Sillah J."/>
            <person name="Sirugo G."/>
            <person name="Peshu N."/>
            <person name="Williams T.N."/>
            <person name="Maitland K."/>
            <person name="Davies R.J.O."/>
            <person name="Kwiatkowski D.P."/>
            <person name="Day N.P."/>
            <person name="Yala D."/>
            <person name="Crook D.W."/>
            <person name="Marsh K."/>
            <person name="Berkley J.A."/>
            <person name="O'Neill L.A.J."/>
            <person name="Hill A.V.S."/>
        </authorList>
    </citation>
    <scope>INTERACTION WITH TIRAP</scope>
</reference>
<reference key="14">
    <citation type="journal article" date="2008" name="J. Immunol.">
        <title>Etk/BMX, a Btk family tyrosine kinase, and Mal contribute to the cross-talk between MyD88 and FAK pathways.</title>
        <authorList>
            <person name="Semaan N."/>
            <person name="Alsaleh G."/>
            <person name="Gottenberg J.E."/>
            <person name="Wachsmann D."/>
            <person name="Sibilia J."/>
        </authorList>
    </citation>
    <scope>FUNCTION</scope>
    <scope>INTERACTION WITH BMX</scope>
</reference>
<reference key="15">
    <citation type="journal article" date="2009" name="J. Immunol.">
        <title>Modulation of TLR signaling by multiple MyD88-interacting partners including leucine-rich repeat Fli-I-interacting proteins.</title>
        <authorList>
            <person name="Dai P."/>
            <person name="Jeong S.Y."/>
            <person name="Yu Y."/>
            <person name="Leng T."/>
            <person name="Wu W."/>
            <person name="Xie L."/>
            <person name="Chen X."/>
        </authorList>
    </citation>
    <scope>INTERACTION WITH FLII; LRRFIP1 AND LRRFIP2</scope>
</reference>
<reference key="16">
    <citation type="journal article" date="2010" name="J. Biol. Chem.">
        <title>TRIF mediates Toll-like receptor 5-induced signaling in intestinal epithelial cells.</title>
        <authorList>
            <person name="Choi Y.J."/>
            <person name="Im E."/>
            <person name="Chung H.K."/>
            <person name="Pothoulakis C."/>
            <person name="Rhee S.H."/>
        </authorList>
    </citation>
    <scope>FUNCTION</scope>
    <scope>INTERACTION WITH TLR5</scope>
</reference>
<reference key="17">
    <citation type="journal article" date="2010" name="J. Biol. Chem.">
        <title>AIP1 functions as Arf6-GAP to negatively regulate TLR4 signaling.</title>
        <authorList>
            <person name="Wan T."/>
            <person name="Liu T."/>
            <person name="Zhang H."/>
            <person name="Tang S."/>
            <person name="Min W."/>
        </authorList>
    </citation>
    <scope>INTERACTION WITH TIRAP</scope>
</reference>
<reference key="18">
    <citation type="journal article" date="2010" name="Proc. Natl. Acad. Sci. U.S.A.">
        <title>Aspartate-glutamate-alanine-histidine box motif (DEAH)/RNA helicase A helicases sense microbial DNA in human plasmacytoid dendritic cells.</title>
        <authorList>
            <person name="Kim T."/>
            <person name="Pazhoor S."/>
            <person name="Bao M."/>
            <person name="Zhang Z."/>
            <person name="Hanabuchi S."/>
            <person name="Facchinetti V."/>
            <person name="Bover L."/>
            <person name="Plumas J."/>
            <person name="Chaperot L."/>
            <person name="Qin J."/>
            <person name="Liu Y.J."/>
        </authorList>
    </citation>
    <scope>INTERACTION WITH DHX9</scope>
</reference>
<reference key="19">
    <citation type="journal article" date="2011" name="J. Biol. Chem.">
        <title>Two human MYD88 variants, S34Y and R98C, interfere with MyD88-IRAK4-myddosome assembly.</title>
        <authorList>
            <person name="George J."/>
            <person name="Motshwene P.G."/>
            <person name="Wang H."/>
            <person name="Kubarenko A.V."/>
            <person name="Rautanen A."/>
            <person name="Mills T.C."/>
            <person name="Hill A.V."/>
            <person name="Gay N.J."/>
            <person name="Weber A.N."/>
        </authorList>
    </citation>
    <scope>INTERACTION WITH IRAK4</scope>
    <scope>CHARACTERIZATION OF VARIANTS TYR-34; CYS-98 AND ILE-178</scope>
</reference>
<reference key="20">
    <citation type="journal article" date="2012" name="Biochem. Biophys. Res. Commun.">
        <title>The Brucella TIR-like protein TcpB interacts with the death domain of MyD88.</title>
        <authorList>
            <person name="Chaudhary A."/>
            <person name="Ganguly K."/>
            <person name="Cabantous S."/>
            <person name="Waldo G.S."/>
            <person name="Micheva-Viteva S.N."/>
            <person name="Nag K."/>
            <person name="Hlavacek W.S."/>
            <person name="Tung C.S."/>
        </authorList>
    </citation>
    <scope>INTERACTION WITH B.MELITENSIS TCPB (MICROBIAL INFECTION)</scope>
</reference>
<reference key="21">
    <citation type="journal article" date="2013" name="Cell Rep.">
        <title>IKKepsilon-mediated tumorigenesis requires K63-linked polyubiquitination by a cIAP1/cIAP2/TRAF2 E3 ubiquitin ligase complex.</title>
        <authorList>
            <person name="Zhou A.Y."/>
            <person name="Shen R.R."/>
            <person name="Kim E."/>
            <person name="Lock Y.J."/>
            <person name="Xu M."/>
            <person name="Chen Z.J."/>
            <person name="Hahn W.C."/>
        </authorList>
    </citation>
    <scope>INTERACTION WITH IKBKE</scope>
</reference>
<reference key="22">
    <citation type="journal article" date="2013" name="J. Proteome Res.">
        <title>Toward a comprehensive characterization of a human cancer cell phosphoproteome.</title>
        <authorList>
            <person name="Zhou H."/>
            <person name="Di Palma S."/>
            <person name="Preisinger C."/>
            <person name="Peng M."/>
            <person name="Polat A.N."/>
            <person name="Heck A.J."/>
            <person name="Mohammed S."/>
        </authorList>
    </citation>
    <scope>PHOSPHORYLATION [LARGE SCALE ANALYSIS] AT SER-244</scope>
    <scope>IDENTIFICATION BY MASS SPECTROMETRY [LARGE SCALE ANALYSIS]</scope>
    <source>
        <tissue>Erythroleukemia</tissue>
    </source>
</reference>
<reference key="23">
    <citation type="journal article" date="2014" name="Mol. Immunol.">
        <title>Functional assessment of the mutational effects of human IRAK4 and MyD88 genes.</title>
        <authorList>
            <person name="Yamamoto T."/>
            <person name="Tsutsumi N."/>
            <person name="Tochio H."/>
            <person name="Ohnishi H."/>
            <person name="Kubota K."/>
            <person name="Kato Z."/>
            <person name="Shirakawa M."/>
            <person name="Kondo N."/>
        </authorList>
    </citation>
    <scope>FUNCTION</scope>
    <scope>INTERACTION WITH IRAK4</scope>
    <scope>CHARACTERIZATION OF VARIANTS TYR-34; CYS-98 AND ILE-178</scope>
    <scope>CHARACTERIZATION OF VARIANTS IMD68 GLU-52 DEL; PRO-93 AND CYS-196</scope>
</reference>
<reference key="24">
    <citation type="journal article" date="2014" name="J. Biol. Chem.">
        <title>Mechanism of bacterial interference with TLR4 signaling by Brucella Toll/interleukin-1 receptor domain-containing protein TcpB.</title>
        <authorList>
            <person name="Alaidarous M."/>
            <person name="Ve T."/>
            <person name="Casey L.W."/>
            <person name="Valkov E."/>
            <person name="Ericsson D.J."/>
            <person name="Ullah M.O."/>
            <person name="Schembri M.A."/>
            <person name="Mansell A."/>
            <person name="Sweet M.J."/>
            <person name="Kobe B."/>
        </authorList>
    </citation>
    <scope>INTERACTION WITH B.MELITENSIS PROTEIN TCPB (MICROBIAL INFECTION)</scope>
</reference>
<reference key="25">
    <citation type="journal article" date="2014" name="PLoS ONE">
        <title>A TIR domain protein from E. faecalis attenuates MyD88-mediated signaling and NF-kappaB activation.</title>
        <authorList>
            <person name="Zou J."/>
            <person name="Baghdayan A.S."/>
            <person name="Payne S.J."/>
            <person name="Shankar N."/>
        </authorList>
    </citation>
    <scope>INTERACTION WITH E.FAECALIS PROTEIN TCPF (MICROBIAL INFECTION)</scope>
</reference>
<reference key="26">
    <citation type="journal article" date="2014" name="PLoS ONE">
        <title>Human metapneumovirus M2-2 protein inhibits innate immune response in monocyte-derived dendritic cells.</title>
        <authorList>
            <person name="Ren J."/>
            <person name="Liu G."/>
            <person name="Go J."/>
            <person name="Kolli D."/>
            <person name="Zhang G."/>
            <person name="Bao X."/>
        </authorList>
    </citation>
    <scope>INTERACTION WITH HUMAN METAPNEUMOVIRUS M2-2 (MICROBIAL INFECTION)</scope>
</reference>
<reference key="27">
    <citation type="journal article" date="2015" name="J. Virol.">
        <title>Kaposi's sarcoma-associated herpesvirus-encoded replication and transcription activator impairs innate immunity via ubiquitin-mediated degradation of myeloid differentiation factor 88.</title>
        <authorList>
            <person name="Zhao Q."/>
            <person name="Liang D."/>
            <person name="Sun R."/>
            <person name="Jia B."/>
            <person name="Xia T."/>
            <person name="Xiao H."/>
            <person name="Lan K."/>
        </authorList>
    </citation>
    <scope>UBIQUITINATION BY HUMAN HERPESVIRUS 8 PROTEIN RTA/ORF50 (MICROBIAL INFECTION)</scope>
</reference>
<reference key="28">
    <citation type="journal article" date="2018" name="Mol. Cell">
        <title>OTUD4 Is a Phospho-Activated K63 Deubiquitinase that Regulates MyD88-Dependent Signaling.</title>
        <authorList>
            <person name="Zhao Y."/>
            <person name="Mudge M.C."/>
            <person name="Soll J.M."/>
            <person name="Rodrigues R.B."/>
            <person name="Byrum A.K."/>
            <person name="Schwarzkopf E.A."/>
            <person name="Bradstreet T.R."/>
            <person name="Gygi S.P."/>
            <person name="Edelson B.T."/>
            <person name="Mosammaparast N."/>
        </authorList>
    </citation>
    <scope>INTERACTION WITH OTUD4</scope>
    <scope>UBIQUITINATION</scope>
</reference>
<reference key="29">
    <citation type="journal article" date="2021" name="IScience">
        <title>SARS-CoV-2, SARS-CoV-1, and HIV-1 derived ssRNA sequences activate the NLRP3 inflammasome in human macrophages through a non-classical pathway.</title>
        <authorList>
            <person name="Campbell G.R."/>
            <person name="To R.K."/>
            <person name="Hanna J."/>
            <person name="Spector S.A."/>
        </authorList>
    </citation>
    <scope>FUNCTION</scope>
</reference>
<reference key="30">
    <citation type="journal article" date="2022" name="Int. J. Mol. Sci.">
        <title>PAUF Induces Migration of Human Pancreatic Cancer Cells Exclusively via the TLR4/MyD88/NF-kappaB Signaling Pathway.</title>
        <authorList>
            <person name="Youn S.E."/>
            <person name="Jiang F."/>
            <person name="Won H.Y."/>
            <person name="Hong D.E."/>
            <person name="Kang T.H."/>
            <person name="Park Y.Y."/>
            <person name="Koh S.S."/>
        </authorList>
    </citation>
    <scope>INTERACTION WITH TLR4</scope>
</reference>
<reference key="31">
    <citation type="journal article" date="2023" name="EMBO Rep.">
        <title>USP3 plays a critical role in the induction of innate immune tolerance.</title>
        <authorList>
            <person name="Duan T."/>
            <person name="Feng Y."/>
            <person name="Du Y."/>
            <person name="Xing C."/>
            <person name="Chu J."/>
            <person name="Ou J."/>
            <person name="Liu X."/>
            <person name="Zhu M."/>
            <person name="Qian C."/>
            <person name="Yin B."/>
            <person name="Wang H.Y."/>
            <person name="Cui J."/>
            <person name="Wang R.F."/>
        </authorList>
    </citation>
    <scope>FUNCTION</scope>
    <scope>SUBCELLULAR LOCATION</scope>
    <scope>DEUBIQUITINATION BY USP3</scope>
</reference>
<reference key="32">
    <citation type="journal article" date="2009" name="Proc. Natl. Acad. Sci. U.S.A.">
        <title>Structural basis for the multiple interactions of the MyD88 TIR domain in TLR4 signaling.</title>
        <authorList>
            <person name="Ohnishi H."/>
            <person name="Tochio H."/>
            <person name="Kato Z."/>
            <person name="Orii K.E."/>
            <person name="Li A."/>
            <person name="Kimura T."/>
            <person name="Hiroaki H."/>
            <person name="Kondo N."/>
            <person name="Shirakawa M."/>
        </authorList>
    </citation>
    <scope>STRUCTURE BY NMR OF 148-296</scope>
    <scope>FUNCTION</scope>
    <scope>INTERACTION WITH TIRAP AND IRAK4</scope>
    <scope>MUTAGENESIS OF ARG-196; ASP-197; ARG-217; LYS-282 AND ARG-288</scope>
    <scope>CHARACTERIZATION OF VARIANT IMD68 CYS-196</scope>
</reference>
<reference key="33">
    <citation type="submission" date="2009-02" db="PDB data bank">
        <title>Solution NMR structure of human myeloid differentiation primary response (MYD88).</title>
        <authorList>
            <consortium name="Northeast structural genomics consortium (NESG)"/>
        </authorList>
    </citation>
    <scope>STRUCTURE BY NMR OF 146-296</scope>
</reference>
<reference evidence="40 41" key="34">
    <citation type="journal article" date="2013" name="Proc. Natl. Acad. Sci. U.S.A.">
        <title>Molecular mechanisms for the subversion of MyD88 signaling by TcpC from virulent uropathogenic Escherichia coli.</title>
        <authorList>
            <person name="Snyder G.A."/>
            <person name="Cirl C."/>
            <person name="Jiang J."/>
            <person name="Chen K."/>
            <person name="Waldhuber A."/>
            <person name="Smith P."/>
            <person name="Roemmler F."/>
            <person name="Snyder N."/>
            <person name="Fresquez T."/>
            <person name="Duerr S."/>
            <person name="Tjandra N."/>
            <person name="Miethke T."/>
            <person name="Xiao T.S."/>
        </authorList>
    </citation>
    <scope>X-RAY CRYSTALLOGRAPHY (1.45 ANGSTROMS) OF 157-296</scope>
    <scope>MUTAGENESIS OF ILE-179; CYS-203 AND CYS-280</scope>
    <scope>INTERACTION WITH E.COLI PROTEIN TCPC (MICROBIAL INFECTION)</scope>
</reference>
<reference key="35">
    <citation type="journal article" date="2008" name="Science">
        <title>Pyogenic bacterial infections in humans with MyD88 deficiency.</title>
        <authorList>
            <person name="von Bernuth H."/>
            <person name="Picard C."/>
            <person name="Jin Z."/>
            <person name="Pankla R."/>
            <person name="Xiao H."/>
            <person name="Ku C.-L."/>
            <person name="Chrabieh M."/>
            <person name="Mustapha I.B."/>
            <person name="Ghandil P."/>
            <person name="Camcioglu Y."/>
            <person name="Vasconcelos J."/>
            <person name="Sirvent N."/>
            <person name="Guedes M."/>
            <person name="Vitor A.B."/>
            <person name="Herrero-Mata M.J."/>
            <person name="Arostegui J.I."/>
            <person name="Rodrigo C."/>
            <person name="Alsina L."/>
            <person name="Ruiz-Ortiz E."/>
            <person name="Juan M."/>
            <person name="Fortuny C."/>
            <person name="Yaguee J."/>
            <person name="Anton J."/>
            <person name="Pascal M."/>
            <person name="Chang H.-H."/>
            <person name="Janniere L."/>
            <person name="Rose Y."/>
            <person name="Garty B.-Z."/>
            <person name="Chapel H."/>
            <person name="Issekutz A."/>
            <person name="Marodi L."/>
            <person name="Rodriguez-Gallego C."/>
            <person name="Banchereau J."/>
            <person name="Abel L."/>
            <person name="Li X."/>
            <person name="Chaussabel D."/>
            <person name="Puel A."/>
            <person name="Casanova J.-L."/>
        </authorList>
    </citation>
    <scope>VARIANTS IMD68 PRO-93 AND CYS-196</scope>
    <scope>CHARACTERIZATION OF VARIANTS IMD68 PRO-93 AND CYS-196</scope>
</reference>
<reference key="36">
    <citation type="journal article" date="2010" name="Medicine (Baltimore)">
        <title>Clinical features and outcome of patients with IRAK-4 and MyD88 deficiency.</title>
        <authorList>
            <person name="Picard C."/>
            <person name="von Bernuth H."/>
            <person name="Ghandil P."/>
            <person name="Chrabieh M."/>
            <person name="Levy O."/>
            <person name="Arkwright P.D."/>
            <person name="McDonald D."/>
            <person name="Geha R.S."/>
            <person name="Takada H."/>
            <person name="Krause J.C."/>
            <person name="Creech C.B."/>
            <person name="Ku C.L."/>
            <person name="Ehl S."/>
            <person name="Marodi L."/>
            <person name="Al-Muhsen S."/>
            <person name="Al-Hajjar S."/>
            <person name="Al-Ghonaium A."/>
            <person name="Day-Good N.K."/>
            <person name="Holland S.M."/>
            <person name="Gallin J.I."/>
            <person name="Chapel H."/>
            <person name="Speert D.P."/>
            <person name="Rodriguez-Gallego C."/>
            <person name="Colino E."/>
            <person name="Garty B.Z."/>
            <person name="Roifman C."/>
            <person name="Hara T."/>
            <person name="Yoshikawa H."/>
            <person name="Nonoyama S."/>
            <person name="Domachowske J."/>
            <person name="Issekutz A.C."/>
            <person name="Tang M."/>
            <person name="Smart J."/>
            <person name="Zitnik S.E."/>
            <person name="Hoarau C."/>
            <person name="Kumararatne D.S."/>
            <person name="Thrasher A.J."/>
            <person name="Davies E.G."/>
            <person name="Bethune C."/>
            <person name="Sirvent N."/>
            <person name="de Ricaud D."/>
            <person name="Camcioglu Y."/>
            <person name="Vasconcelos J."/>
            <person name="Guedes M."/>
            <person name="Vitor A.B."/>
            <person name="Rodrigo C."/>
            <person name="Almazan F."/>
            <person name="Mendez M."/>
            <person name="Arostegui J.I."/>
            <person name="Alsina L."/>
            <person name="Fortuny C."/>
            <person name="Reichenbach J."/>
            <person name="Verbsky J.W."/>
            <person name="Bossuyt X."/>
            <person name="Doffinger R."/>
            <person name="Abel L."/>
            <person name="Puel A."/>
            <person name="Casanova J.L."/>
        </authorList>
    </citation>
    <scope>INVOLVEMENT IN IMD68</scope>
    <scope>VARIANTS IMD68 GLU-52 DEL; PRO-93 AND CYS-196</scope>
</reference>
<reference key="37">
    <citation type="journal article" date="2011" name="Nature">
        <title>Oncogenically active MYD88 mutations in human lymphoma.</title>
        <authorList>
            <person name="Ngo V.N."/>
            <person name="Young R.M."/>
            <person name="Schmitz R."/>
            <person name="Jhavar S."/>
            <person name="Xiao W."/>
            <person name="Lim K.H."/>
            <person name="Kohlhammer H."/>
            <person name="Xu W."/>
            <person name="Yang Y."/>
            <person name="Zhao H."/>
            <person name="Shaffer A.L."/>
            <person name="Romesser P."/>
            <person name="Wright G."/>
            <person name="Powell J."/>
            <person name="Rosenwald A."/>
            <person name="Muller-Hermelink H.K."/>
            <person name="Ott G."/>
            <person name="Gascoyne R.D."/>
            <person name="Connors J.M."/>
            <person name="Rimsza L.M."/>
            <person name="Campo E."/>
            <person name="Jaffe E.S."/>
            <person name="Delabie J."/>
            <person name="Smeland E.B."/>
            <person name="Fisher R.I."/>
            <person name="Braziel R.M."/>
            <person name="Tubbs R.R."/>
            <person name="Cook J.R."/>
            <person name="Weisenburger D.D."/>
            <person name="Chan W.C."/>
            <person name="Staudt L.M."/>
        </authorList>
    </citation>
    <scope>VARIANTS MET-39; GLY-136; ILE-136; PHE-204; ARG-205; CYS-206; THR-207; ARG-209; THR-219; ASN-230 AND PRO-281</scope>
    <scope>CHARACTERIZATION OF VARIANTS ARG-209; THR-219; ASN-230 AND PRO-281</scope>
    <scope>INTERACTION WITH IRAK4</scope>
    <scope>VARIANT WM1 PRO-252</scope>
    <scope>CHARACTERIZATION OF VARIANT WM1 PRO-252</scope>
</reference>
<reference key="38">
    <citation type="journal article" date="2012" name="N. Engl. J. Med.">
        <title>MYD88 L265P somatic mutation in Waldenstrom's macroglobulinemia.</title>
        <authorList>
            <person name="Treon S.P."/>
            <person name="Xu L."/>
            <person name="Yang G."/>
            <person name="Zhou Y."/>
            <person name="Liu X."/>
            <person name="Cao Y."/>
            <person name="Sheehy P."/>
            <person name="Manning R.J."/>
            <person name="Patterson C.J."/>
            <person name="Tripsas C."/>
            <person name="Arcaini L."/>
            <person name="Pinkus G.S."/>
            <person name="Rodig S.J."/>
            <person name="Sohani A.R."/>
            <person name="Harris N.L."/>
            <person name="Laramie J.M."/>
            <person name="Skifter D.A."/>
            <person name="Lincoln S.E."/>
            <person name="Hunter Z.R."/>
        </authorList>
    </citation>
    <scope>VARIANT WM1 PRO-252</scope>
</reference>
<reference key="39">
    <citation type="journal article" date="2014" name="Blood">
        <title>The genomic landscape of Waldenstrom macroglobulinemia is characterized by highly recurring MYD88 and WHIM-like CXCR4 mutations, and small somatic deletions associated with B-cell lymphomagenesis.</title>
        <authorList>
            <person name="Hunter Z.R."/>
            <person name="Xu L."/>
            <person name="Yang G."/>
            <person name="Zhou Y."/>
            <person name="Liu X."/>
            <person name="Cao Y."/>
            <person name="Manning R.J."/>
            <person name="Tripsas C."/>
            <person name="Patterson C.J."/>
            <person name="Sheehy P."/>
            <person name="Treon S.P."/>
        </authorList>
    </citation>
    <scope>VARIANT WM1 PRO-252</scope>
</reference>
<evidence type="ECO:0000250" key="1"/>
<evidence type="ECO:0000250" key="2">
    <source>
        <dbReference type="UniProtKB" id="P22366"/>
    </source>
</evidence>
<evidence type="ECO:0000255" key="3">
    <source>
        <dbReference type="PROSITE-ProRule" id="PRU00064"/>
    </source>
</evidence>
<evidence type="ECO:0000255" key="4">
    <source>
        <dbReference type="PROSITE-ProRule" id="PRU00204"/>
    </source>
</evidence>
<evidence type="ECO:0000269" key="5">
    <source>
    </source>
</evidence>
<evidence type="ECO:0000269" key="6">
    <source>
    </source>
</evidence>
<evidence type="ECO:0000269" key="7">
    <source>
    </source>
</evidence>
<evidence type="ECO:0000269" key="8">
    <source>
    </source>
</evidence>
<evidence type="ECO:0000269" key="9">
    <source>
    </source>
</evidence>
<evidence type="ECO:0000269" key="10">
    <source>
    </source>
</evidence>
<evidence type="ECO:0000269" key="11">
    <source>
    </source>
</evidence>
<evidence type="ECO:0000269" key="12">
    <source>
    </source>
</evidence>
<evidence type="ECO:0000269" key="13">
    <source>
    </source>
</evidence>
<evidence type="ECO:0000269" key="14">
    <source>
    </source>
</evidence>
<evidence type="ECO:0000269" key="15">
    <source>
    </source>
</evidence>
<evidence type="ECO:0000269" key="16">
    <source>
    </source>
</evidence>
<evidence type="ECO:0000269" key="17">
    <source>
    </source>
</evidence>
<evidence type="ECO:0000269" key="18">
    <source>
    </source>
</evidence>
<evidence type="ECO:0000269" key="19">
    <source>
    </source>
</evidence>
<evidence type="ECO:0000269" key="20">
    <source>
    </source>
</evidence>
<evidence type="ECO:0000269" key="21">
    <source>
    </source>
</evidence>
<evidence type="ECO:0000269" key="22">
    <source>
    </source>
</evidence>
<evidence type="ECO:0000269" key="23">
    <source>
    </source>
</evidence>
<evidence type="ECO:0000269" key="24">
    <source>
    </source>
</evidence>
<evidence type="ECO:0000269" key="25">
    <source>
    </source>
</evidence>
<evidence type="ECO:0000269" key="26">
    <source>
    </source>
</evidence>
<evidence type="ECO:0000269" key="27">
    <source>
    </source>
</evidence>
<evidence type="ECO:0000269" key="28">
    <source>
    </source>
</evidence>
<evidence type="ECO:0000269" key="29">
    <source>
    </source>
</evidence>
<evidence type="ECO:0000269" key="30">
    <source>
    </source>
</evidence>
<evidence type="ECO:0000269" key="31">
    <source>
    </source>
</evidence>
<evidence type="ECO:0000269" key="32">
    <source>
    </source>
</evidence>
<evidence type="ECO:0000269" key="33">
    <source>
    </source>
</evidence>
<evidence type="ECO:0000269" key="34">
    <source>
    </source>
</evidence>
<evidence type="ECO:0000269" key="35">
    <source>
    </source>
</evidence>
<evidence type="ECO:0000303" key="36">
    <source>
    </source>
</evidence>
<evidence type="ECO:0000303" key="37">
    <source>
    </source>
</evidence>
<evidence type="ECO:0000305" key="38"/>
<evidence type="ECO:0000312" key="39">
    <source>
        <dbReference type="HGNC" id="HGNC:7562"/>
    </source>
</evidence>
<evidence type="ECO:0007744" key="40">
    <source>
        <dbReference type="PDB" id="4DOM"/>
    </source>
</evidence>
<evidence type="ECO:0007744" key="41">
    <source>
        <dbReference type="PDB" id="4EO7"/>
    </source>
</evidence>
<evidence type="ECO:0007744" key="42">
    <source>
    </source>
</evidence>
<evidence type="ECO:0007829" key="43">
    <source>
        <dbReference type="PDB" id="3MOP"/>
    </source>
</evidence>
<evidence type="ECO:0007829" key="44">
    <source>
        <dbReference type="PDB" id="4DOM"/>
    </source>
</evidence>
<evidence type="ECO:0007829" key="45">
    <source>
        <dbReference type="PDB" id="4EO7"/>
    </source>
</evidence>
<evidence type="ECO:0007829" key="46">
    <source>
        <dbReference type="PDB" id="6I3N"/>
    </source>
</evidence>
<evidence type="ECO:0007829" key="47">
    <source>
        <dbReference type="PDB" id="7BER"/>
    </source>
</evidence>
<sequence length="296" mass="33233">MAAGGPGAGSAAPVSSTSSLPLAALNMRVRRRLSLFLNVRTQVAADWTALAEEMDFEYLEIRQLETQADPTGRLLDAWQGRPGASVGRLLELLTKLGRDDVLLELGPSIEEDCQKYILKQQQEEAEKPLQVAAVDSSVPRTAELAGITTLDDPLGHMPERFDAFICYCPSDIQFVQEMIRQLEQTNYRLKLCVSDRDVLPGTCVWSIASELIEKRCRRMVVVVSDDYLQSKECDFQTKFALSLSPGAHQKRLIPIKYKAMKKEFPSILRFITVCDYTNPCTKSWFWTRLAKALSLP</sequence>
<comment type="function">
    <text evidence="2 5 10 13 16 25 31 33 35">Adapter protein involved in the Toll-like receptor and IL-1 receptor signaling pathway in the innate immune response (PubMed:15361868, PubMed:18292575, PubMed:33718825, PubMed:37971847). Acts via IRAK1, IRAK2, IRF7 and TRAF6, leading to NF-kappa-B activation, cytokine secretion and the inflammatory response (PubMed:15361868, PubMed:19506249, PubMed:24316379). Increases IL-8 transcription (PubMed:9013863). Involved in IL-18-mediated signaling pathway. Activates IRF1 resulting in its rapid migration into the nucleus to mediate an efficient induction of IFN-beta, NOS2/INOS, and IL12A genes. Upon TLR8 activation by GU-rich single-stranded RNA (GU-rich RNA) derived from viruses such as SARS-CoV-2, SARS-CoV and HIV-1, induces IL1B release through NLRP3 inflammasome activation (PubMed:33718825). MyD88-mediated signaling in intestinal epithelial cells is crucial for maintenance of gut homeostasis and controls the expression of the antimicrobial lectin REG3G in the small intestine (By similarity).</text>
</comment>
<comment type="subunit">
    <text evidence="5 6 7 8 9 10 12 13 14 15 16 17 19 22 25 30 32">Homodimer. Also forms heterodimers with TIRAP (PubMed:17322885, PubMed:19506249, PubMed:19948740). Binds to TLR2, TLR5, IRAK1, IRAK2 and IRAK4 via their respective TIR domains. Interacts with IL18R1. Interacts with BMX, IL1RL1, IKBKE and IRF7. Interacts with LRRFIP1 and LRRFIP2; this interaction positively regulates Toll-like receptor (TLR) signaling in response to agonist. Interacts with FLII. LRRFIP1 and LRRFIP2 compete with FLII for MYD88-binding. Interacts with IRF1. Upon IL1B treatment, forms a complex with PELI1, IRAK1, IRAK4 and TRAF6; this complex recruits MAP3K7/TAK1, TAB1 and TAB2 to mediate NF-kappa-B activation. Direct binding of SMAD6 to PELI1 prevents the complex formation and hence negatively regulates IL1R-TLR signaling and eventually NF-kappa-B-mediated gene expression. May interact with PIK3AP1. Interacts (via TIR domain) with DHX9 (via H2A and OB-fold regions); this interaction is direct (PubMed:20696886). Interacts with OTUD4 deubiquitinase; the interaction is direct (PubMed:29395066). Interacts with TLR4 (PubMed:36232715).</text>
</comment>
<comment type="subunit">
    <text evidence="23">(Microbial infection) In case of infection, interacts with uropathogenic E.coli protein TcpC; suppressing Toll-like receptor (TLR)-mediated cytokine production.</text>
</comment>
<comment type="subunit">
    <text evidence="29">(Microbial infection) In case of infection, interacts with uropathogenic E.faecalis protein TcpF; suppressing Toll-like receptor (TLR)-mediated cytokine production.</text>
</comment>
<comment type="subunit">
    <text evidence="20 24">(Microbial infection) In case of infection, interacts with B.melitensis protein TcpB.</text>
</comment>
<comment type="subunit">
    <text evidence="27">(Microbial infection) Interacts with human metapneumovirus protein M2-2; this interaction prevents MYD88-mediated cytokine secretion.</text>
</comment>
<comment type="interaction">
    <interactant intactId="EBI-447677">
        <id>Q99836</id>
    </interactant>
    <interactant intactId="EBI-2548605">
        <id>Q8NF50</id>
        <label>DOCK8</label>
    </interactant>
    <organismsDiffer>false</organismsDiffer>
    <experiments>3</experiments>
</comment>
<comment type="interaction">
    <interactant intactId="EBI-447677">
        <id>Q99836</id>
    </interactant>
    <interactant intactId="EBI-494804">
        <id>Q13158</id>
        <label>FADD</label>
    </interactant>
    <organismsDiffer>false</organismsDiffer>
    <experiments>3</experiments>
</comment>
<comment type="interaction">
    <interactant intactId="EBI-447677">
        <id>Q99836</id>
    </interactant>
    <interactant intactId="EBI-301697">
        <id>Q9UBN7</id>
        <label>HDAC6</label>
    </interactant>
    <organismsDiffer>false</organismsDiffer>
    <experiments>6</experiments>
</comment>
<comment type="interaction">
    <interactant intactId="EBI-447677">
        <id>Q99836</id>
    </interactant>
    <interactant intactId="EBI-358664">
        <id>P51617</id>
        <label>IRAK1</label>
    </interactant>
    <organismsDiffer>false</organismsDiffer>
    <experiments>3</experiments>
</comment>
<comment type="interaction">
    <interactant intactId="EBI-447677">
        <id>Q99836</id>
    </interactant>
    <interactant intactId="EBI-10249217">
        <id>Q69FE3</id>
        <label>IRAK4</label>
    </interactant>
    <organismsDiffer>false</organismsDiffer>
    <experiments>5</experiments>
</comment>
<comment type="interaction">
    <interactant intactId="EBI-447677">
        <id>Q99836</id>
    </interactant>
    <interactant intactId="EBI-448378">
        <id>Q9NWZ3</id>
        <label>IRAK4</label>
    </interactant>
    <organismsDiffer>false</organismsDiffer>
    <experiments>15</experiments>
</comment>
<comment type="interaction">
    <interactant intactId="EBI-447677">
        <id>Q99836</id>
    </interactant>
    <interactant intactId="EBI-447677">
        <id>Q99836</id>
        <label>MYD88</label>
    </interactant>
    <organismsDiffer>false</organismsDiffer>
    <experiments>40</experiments>
</comment>
<comment type="interaction">
    <interactant intactId="EBI-447677">
        <id>Q99836</id>
    </interactant>
    <interactant intactId="EBI-741158">
        <id>Q96HA8</id>
        <label>NTAQ1</label>
    </interactant>
    <organismsDiffer>false</organismsDiffer>
    <experiments>3</experiments>
</comment>
<comment type="interaction">
    <interactant intactId="EBI-447677">
        <id>Q99836</id>
    </interactant>
    <interactant intactId="EBI-2340927">
        <id>P78317</id>
        <label>RNF4</label>
    </interactant>
    <organismsDiffer>false</organismsDiffer>
    <experiments>3</experiments>
</comment>
<comment type="interaction">
    <interactant intactId="EBI-447677">
        <id>Q99836</id>
    </interactant>
    <interactant intactId="EBI-11693532">
        <id>Q6SZW1</id>
        <label>SARM1</label>
    </interactant>
    <organismsDiffer>false</organismsDiffer>
    <experiments>5</experiments>
</comment>
<comment type="interaction">
    <interactant intactId="EBI-447677">
        <id>Q99836</id>
    </interactant>
    <interactant intactId="EBI-747107">
        <id>Q8IUQ4</id>
        <label>SIAH1</label>
    </interactant>
    <organismsDiffer>false</organismsDiffer>
    <experiments>3</experiments>
</comment>
<comment type="interaction">
    <interactant intactId="EBI-447677">
        <id>Q99836</id>
    </interactant>
    <interactant intactId="EBI-347161">
        <id>P84022</id>
        <label>SMAD3</label>
    </interactant>
    <organismsDiffer>false</organismsDiffer>
    <experiments>3</experiments>
</comment>
<comment type="interaction">
    <interactant intactId="EBI-447677">
        <id>Q99836</id>
    </interactant>
    <interactant intactId="EBI-743549">
        <id>O43791</id>
        <label>SPOP</label>
    </interactant>
    <organismsDiffer>false</organismsDiffer>
    <experiments>8</experiments>
</comment>
<comment type="interaction">
    <interactant intactId="EBI-447677">
        <id>Q99836</id>
    </interactant>
    <interactant intactId="EBI-2822161">
        <id>Q6IQ16</id>
        <label>SPOPL</label>
    </interactant>
    <organismsDiffer>false</organismsDiffer>
    <experiments>3</experiments>
</comment>
<comment type="interaction">
    <interactant intactId="EBI-447677">
        <id>Q99836</id>
    </interactant>
    <interactant intactId="EBI-1553984">
        <id>Q9UGK3</id>
        <label>STAP2</label>
    </interactant>
    <organismsDiffer>false</organismsDiffer>
    <experiments>3</experiments>
</comment>
<comment type="interaction">
    <interactant intactId="EBI-447677">
        <id>Q99836</id>
    </interactant>
    <interactant intactId="EBI-528644">
        <id>P58753</id>
        <label>TIRAP</label>
    </interactant>
    <organismsDiffer>false</organismsDiffer>
    <experiments>9</experiments>
</comment>
<comment type="interaction">
    <interactant intactId="EBI-447677">
        <id>Q99836</id>
    </interactant>
    <interactant intactId="EBI-973722">
        <id>O60603</id>
        <label>TLR2</label>
    </interactant>
    <organismsDiffer>false</organismsDiffer>
    <experiments>4</experiments>
</comment>
<comment type="interaction">
    <interactant intactId="EBI-447677">
        <id>Q99836</id>
    </interactant>
    <interactant intactId="EBI-528701">
        <id>O00206</id>
        <label>TLR4</label>
    </interactant>
    <organismsDiffer>false</organismsDiffer>
    <experiments>4</experiments>
</comment>
<comment type="interaction">
    <interactant intactId="EBI-447677">
        <id>Q99836</id>
    </interactant>
    <interactant intactId="EBI-519160">
        <id>O14836</id>
        <label>TNFRSF13B</label>
    </interactant>
    <organismsDiffer>false</organismsDiffer>
    <experiments>12</experiments>
</comment>
<comment type="interaction">
    <interactant intactId="EBI-447677">
        <id>Q99836</id>
    </interactant>
    <interactant intactId="EBI-594644">
        <id>P10599</id>
        <label>TXN</label>
    </interactant>
    <organismsDiffer>false</organismsDiffer>
    <experiments>4</experiments>
</comment>
<comment type="interaction">
    <interactant intactId="EBI-447677">
        <id>Q99836</id>
    </interactant>
    <interactant intactId="EBI-302474">
        <id>Q93009</id>
        <label>USP7</label>
    </interactant>
    <organismsDiffer>false</organismsDiffer>
    <experiments>3</experiments>
</comment>
<comment type="interaction">
    <interactant intactId="EBI-447677">
        <id>Q99836</id>
    </interactant>
    <interactant intactId="EBI-11041653">
        <id>P13682</id>
        <label>ZNF35</label>
    </interactant>
    <organismsDiffer>false</organismsDiffer>
    <experiments>3</experiments>
</comment>
<comment type="interaction">
    <interactant intactId="EBI-447677">
        <id>Q99836</id>
    </interactant>
    <interactant intactId="EBI-11616155">
        <id>Q8YF33</id>
        <label>BMEI1694</label>
    </interactant>
    <organismsDiffer>true</organismsDiffer>
    <experiments>4</experiments>
</comment>
<comment type="interaction">
    <interactant intactId="EBI-447677">
        <id>Q99836</id>
    </interactant>
    <interactant intactId="EBI-8803426">
        <id>PRO_0000278740</id>
        <dbReference type="UniProtKB" id="Q03463"/>
    </interactant>
    <organismsDiffer>true</organismsDiffer>
    <experiments>3</experiments>
</comment>
<comment type="interaction">
    <interactant intactId="EBI-15855480">
        <id>Q99836-1</id>
    </interactant>
    <interactant intactId="EBI-448974">
        <id>Q99418</id>
        <label>CYTH2</label>
    </interactant>
    <organismsDiffer>false</organismsDiffer>
    <experiments>3</experiments>
</comment>
<comment type="interaction">
    <interactant intactId="EBI-15855480">
        <id>Q99836-1</id>
    </interactant>
    <interactant intactId="EBI-448378">
        <id>Q9NWZ3</id>
        <label>IRAK4</label>
    </interactant>
    <organismsDiffer>false</organismsDiffer>
    <experiments>9</experiments>
</comment>
<comment type="subcellular location">
    <subcellularLocation>
        <location evidence="5 6 33">Cytoplasm</location>
    </subcellularLocation>
    <subcellularLocation>
        <location evidence="18">Nucleus</location>
    </subcellularLocation>
</comment>
<comment type="alternative products">
    <event type="alternative splicing"/>
    <isoform>
        <id>Q99836-1</id>
        <name>1</name>
        <sequence type="displayed"/>
    </isoform>
    <isoform>
        <id>Q99836-2</id>
        <name>2</name>
        <sequence type="described" ref="VSP_038887"/>
    </isoform>
    <isoform>
        <id>Q99836-3</id>
        <name>3</name>
        <sequence type="described" ref="VSP_043500"/>
    </isoform>
    <isoform>
        <id>Q99836-4</id>
        <name>4</name>
        <sequence type="described" ref="VSP_043498 VSP_043499 VSP_043500"/>
    </isoform>
    <isoform>
        <id>Q99836-5</id>
        <name>5</name>
        <sequence type="described" ref="VSP_053764"/>
    </isoform>
    <isoform>
        <id>Q99836-6</id>
        <name>6</name>
        <sequence type="described" ref="VSP_053765"/>
    </isoform>
</comment>
<comment type="tissue specificity">
    <text evidence="34">Ubiquitous.</text>
</comment>
<comment type="domain">
    <text evidence="2">The intermediate domain (ID) is required for the phosphorylation and activation of IRAK.</text>
</comment>
<comment type="PTM">
    <text evidence="30 33">Ubiquitinated; undergoes 'Lys-63'-linked polyubiquitination. OTUD4 specifically hydrolyzes 'Lys-63'-linked polyubiquitinated MYD88 (PubMed:29395066). Deubiquitinated by USP3 that cleaves 'Lys-63'-linked ubiquitin chains leading to inhibition of MYD88-induced NF-kappa-B signaling (PubMed:37971847).</text>
</comment>
<comment type="PTM">
    <text evidence="28">(Microbial infection) Ubiquitinated by human herpesvirus 8 (KSHV) protein RTA/ORF50, leading to proteasomal degradation ans suppression of TLR4 signaling pathway.</text>
</comment>
<comment type="disease" evidence="11 13 18 25">
    <disease id="DI-02015">
        <name>Immunodeficiency 68</name>
        <acronym>IMD68</acronym>
        <description>An autosomal recessive primary immunodeficiency characterized by life-threatening, often recurrent, pyogenic bacterial infections, including invasive pneumococcal disease, beginning in infancy or early childhood.</description>
        <dbReference type="MIM" id="612260"/>
    </disease>
    <text>The disease is caused by variants affecting the gene represented in this entry.</text>
</comment>
<comment type="disease" evidence="19 21 26">
    <disease id="DI-06042">
        <name>Macroglobulinemia, Waldenstrom, 1</name>
        <acronym>WM1</acronym>
        <description>A malignant B-cell neoplasm characterized by lymphoplasmacytic infiltration of the bone marrow and hypersecretion of monoclonal immunoglobulin M (IgM) protein. Clinical features are variable and include anemia, thrombocytopenia, hepatosplenomegaly, and lymphadenopathy. Many patients have asymptomatic or indolent disease.</description>
        <dbReference type="MIM" id="153600"/>
    </disease>
    <text>The disease is caused by variants affecting the gene represented in this entry.</text>
</comment>
<comment type="disease">
    <text evidence="19 21">Defects in MYD88 are frequently found in many hematological malignancies, such as activated B-cell type diffuse large B-cell lymphoma (ABC-DLBCL), cutaneous diffuse large B cell lymphoma (CBCL) and primary central nervous system lymphoma (PCNSL).</text>
</comment>
<comment type="sequence caution" evidence="38">
    <conflict type="erroneous initiation">
        <sequence resource="EMBL-CDS" id="BAG60822"/>
    </conflict>
    <text>Extended N-terminus.</text>
</comment>
<comment type="sequence caution" evidence="38">
    <conflict type="erroneous initiation">
        <sequence resource="EMBL-CDS" id="BAG60834"/>
    </conflict>
    <text>Extended N-terminus.</text>
</comment>
<comment type="sequence caution" evidence="38">
    <conflict type="erroneous gene model prediction">
        <sequence resource="EMBL-CDS" id="EAW64521"/>
    </conflict>
</comment>
<gene>
    <name evidence="39" type="primary">MYD88</name>
</gene>
<proteinExistence type="evidence at protein level"/>
<accession>Q99836</accession>
<accession>B4DKH8</accession>
<accession>B4DKU4</accession>
<accession>B4DQ60</accession>
<accession>B4DQ72</accession>
<accession>J3KPU4</accession>
<accession>J3KQ87</accession>
<accession>J3KQJ6</accession>
<accession>P78397</accession>
<accession>Q53XS7</accession>